<gene>
    <name type="primary">CHEK1</name>
    <name type="synonym">CHK1</name>
</gene>
<organism>
    <name type="scientific">Homo sapiens</name>
    <name type="common">Human</name>
    <dbReference type="NCBI Taxonomy" id="9606"/>
    <lineage>
        <taxon>Eukaryota</taxon>
        <taxon>Metazoa</taxon>
        <taxon>Chordata</taxon>
        <taxon>Craniata</taxon>
        <taxon>Vertebrata</taxon>
        <taxon>Euteleostomi</taxon>
        <taxon>Mammalia</taxon>
        <taxon>Eutheria</taxon>
        <taxon>Euarchontoglires</taxon>
        <taxon>Primates</taxon>
        <taxon>Haplorrhini</taxon>
        <taxon>Catarrhini</taxon>
        <taxon>Hominidae</taxon>
        <taxon>Homo</taxon>
    </lineage>
</organism>
<comment type="function">
    <text evidence="2 5 9 12 13 15 16 17 19 21 22 24 27 28 30 31 32 37 39 41 43 44 49 50 53 54 55 58">Serine/threonine-protein kinase which is required for checkpoint-mediated cell cycle arrest and activation of DNA repair in response to the presence of DNA damage or unreplicated DNA (PubMed:11535615, PubMed:12399544, PubMed:12446774, PubMed:14559997, PubMed:14988723, PubMed:15311285, PubMed:15650047, PubMed:15665856, PubMed:32357935). May also negatively regulate cell cycle progression during unperturbed cell cycles (PubMed:11535615, PubMed:12399544, PubMed:12446774, PubMed:14559997, PubMed:14988723, PubMed:15311285, PubMed:15650047, PubMed:15665856). This regulation is achieved by a number of mechanisms that together help to preserve the integrity of the genome (PubMed:11535615, PubMed:12399544, PubMed:12446774, PubMed:14559997, PubMed:14988723, PubMed:15311285, PubMed:15650047, PubMed:15665856). Recognizes the substrate consensus sequence [R-X-X-S/T] (PubMed:11535615, PubMed:12399544, PubMed:12446774, PubMed:14559997, PubMed:14988723, PubMed:15311285, PubMed:15650047, PubMed:15665856). Binds to and phosphorylates CDC25A, CDC25B and CDC25C (PubMed:12676583, PubMed:12676925, PubMed:12759351, PubMed:14559997, PubMed:14681206, PubMed:19734889, PubMed:9278511). Phosphorylation of CDC25A at 'Ser-178' and 'Thr-507' and phosphorylation of CDC25C at 'Ser-216' creates binding sites for 14-3-3 proteins which inhibit CDC25A and CDC25C (PubMed:9278511). Phosphorylation of CDC25A at 'Ser-76', 'Ser-124', 'Ser-178', 'Ser-279' and 'Ser-293' promotes proteolysis of CDC25A (PubMed:12676583, PubMed:12676925, PubMed:12759351, PubMed:14681206, PubMed:19734889, PubMed:9278511). Phosphorylation of CDC25A at 'Ser-76' primes the protein for subsequent phosphorylation at 'Ser-79', 'Ser-82' and 'Ser-88' by NEK11, which is required for polyubiquitination and degradation of CDCD25A (PubMed:19734889, PubMed:20090422, PubMed:9278511). Inhibition of CDC25 leads to increased inhibitory tyrosine phosphorylation of CDK-cyclin complexes and blocks cell cycle progression (PubMed:9278511). Also phosphorylates NEK6 (PubMed:18728393). Binds to and phosphorylates RAD51 at 'Thr-309', which promotes the release of RAD51 from BRCA2 and enhances the association of RAD51 with chromatin, thereby promoting DNA repair by homologous recombination (PubMed:15665856). Phosphorylates multiple sites within the C-terminus of TP53, which promotes activation of TP53 by acetylation and promotes cell cycle arrest and suppression of cellular proliferation (PubMed:10673501, PubMed:15659650, PubMed:16511572). Also promotes repair of DNA cross-links through phosphorylation of FANCE (PubMed:17296736). Binds to and phosphorylates TLK1 at 'Ser-743', which prevents the TLK1-dependent phosphorylation of the chromatin assembly factor ASF1A (PubMed:12660173, PubMed:12955071). This may enhance chromatin assembly both in the presence or absence of DNA damage (PubMed:12660173, PubMed:12955071). May also play a role in replication fork maintenance through regulation of PCNA (PubMed:18451105). May regulate the transcription of genes that regulate cell-cycle progression through the phosphorylation of histones (By similarity). Phosphorylates histone H3.1 (to form H3T11ph), which leads to epigenetic inhibition of a subset of genes (By similarity). May also phosphorylate RB1 to promote its interaction with the E2F family of transcription factors and subsequent cell cycle arrest (PubMed:17380128). Phosphorylates SPRTN, promoting SPRTN recruitment to chromatin (PubMed:31316063). Reduces replication stress and activates the G2/M checkpoint, by phosphorylating and inactivating PABIR1/FAM122A and promoting the serine/threonine-protein phosphatase 2A-mediated dephosphorylation and stabilization of WEE1 levels and activity (PubMed:33108758).</text>
</comment>
<comment type="function">
    <molecule>Isoform 2</molecule>
    <text evidence="51">Endogenous repressor of isoform 1, interacts with, and antagonizes CHK1 to promote the S to G2/M phase transition.</text>
</comment>
<comment type="catalytic activity">
    <reaction evidence="5 15 22 31 32 37 38 39 41 42 44 53 58">
        <text>L-seryl-[protein] + ATP = O-phospho-L-seryl-[protein] + ADP + H(+)</text>
        <dbReference type="Rhea" id="RHEA:17989"/>
        <dbReference type="Rhea" id="RHEA-COMP:9863"/>
        <dbReference type="Rhea" id="RHEA-COMP:11604"/>
        <dbReference type="ChEBI" id="CHEBI:15378"/>
        <dbReference type="ChEBI" id="CHEBI:29999"/>
        <dbReference type="ChEBI" id="CHEBI:30616"/>
        <dbReference type="ChEBI" id="CHEBI:83421"/>
        <dbReference type="ChEBI" id="CHEBI:456216"/>
        <dbReference type="EC" id="2.7.11.1"/>
    </reaction>
</comment>
<comment type="catalytic activity">
    <reaction evidence="5 15 22 31 32 37 38 39 41 42 44 53 58">
        <text>L-threonyl-[protein] + ATP = O-phospho-L-threonyl-[protein] + ADP + H(+)</text>
        <dbReference type="Rhea" id="RHEA:46608"/>
        <dbReference type="Rhea" id="RHEA-COMP:11060"/>
        <dbReference type="Rhea" id="RHEA-COMP:11605"/>
        <dbReference type="ChEBI" id="CHEBI:15378"/>
        <dbReference type="ChEBI" id="CHEBI:30013"/>
        <dbReference type="ChEBI" id="CHEBI:30616"/>
        <dbReference type="ChEBI" id="CHEBI:61977"/>
        <dbReference type="ChEBI" id="CHEBI:456216"/>
        <dbReference type="EC" id="2.7.11.1"/>
    </reaction>
</comment>
<comment type="activity regulation">
    <text evidence="8 11 14 16 18 20 32 38 47 48 53">Activated through phosphorylation predominantly by ATR but also by ATM in response to DNA damage or inhibition of DNA replication (PubMed:11390642, PubMed:12588868, PubMed:12676583, PubMed:12676962, PubMed:15665856, PubMed:19716789). Activation is modulated by several mediators including CLSPN, BRCA1 and FEM1B (PubMed:11836499, PubMed:12766152, PubMed:16963448, PubMed:19330022). Proteolytic cleavage at the C-terminus by SPRTN during normal DNA replication activates the protein kinase activity (PubMed:31316063).</text>
</comment>
<comment type="subunit">
    <text evidence="11 15 18 20 32 33 35 36 38 46 47 48 58">Interacts (phosphorylated by ATR) with RAD51 (PubMed:15665856). Interacts with and phosphorylates CLSPN, an adapter protein that regulates the ATR-dependent phosphorylation of CHEK1 (PubMed:16963448). Interacts with BRCA1 (PubMed:11836499). Interacts with and phosphorylates CDC25A, CDC25B and CDC25C (PubMed:9278511). Interacts with FBXO6, which regulates CHEK1 (PubMed:19716789). Interacts with PPM1D, which regulates CHEK1 through dephosphorylation (PubMed:15870257). Interacts with TIMELESS; DNA damage-dependent (PubMed:15798197). Interacts with FEM1B; activates CHEK1 in response to stress (PubMed:19330022). Interacts with TLK1 (PubMed:12660173). Interacts with XPO1 and YWHAZ (PubMed:12676962). Interacts with CDK5RAP3; antagonizes CHEK1 (PubMed:19223857).</text>
</comment>
<comment type="subunit">
    <molecule>Isoform 1</molecule>
    <text evidence="51">Isoform 1 associates with isoform 2, the interaction is disrupted upon phosphorylation by ATR.</text>
</comment>
<comment type="interaction">
    <interactant intactId="EBI-974488">
        <id>O14757</id>
    </interactant>
    <interactant intactId="EBI-349905">
        <id>P38398</id>
        <label>BRCA1</label>
    </interactant>
    <organismsDiffer>false</organismsDiffer>
    <experiments>3</experiments>
</comment>
<comment type="interaction">
    <interactant intactId="EBI-974488">
        <id>O14757</id>
    </interactant>
    <interactant intactId="EBI-974439">
        <id>P30307</id>
        <label>CDC25C</label>
    </interactant>
    <organismsDiffer>false</organismsDiffer>
    <experiments>2</experiments>
</comment>
<comment type="interaction">
    <interactant intactId="EBI-974488">
        <id>O14757</id>
    </interactant>
    <interactant intactId="EBI-1369377">
        <id>Q9HAW4</id>
        <label>CLSPN</label>
    </interactant>
    <organismsDiffer>false</organismsDiffer>
    <experiments>5</experiments>
</comment>
<comment type="interaction">
    <interactant intactId="EBI-974488">
        <id>O14757</id>
    </interactant>
    <interactant intactId="EBI-2941912">
        <id>Q9UJM3</id>
        <label>ERRFI1</label>
    </interactant>
    <organismsDiffer>false</organismsDiffer>
    <experiments>2</experiments>
</comment>
<comment type="interaction">
    <interactant intactId="EBI-974488">
        <id>O14757</id>
    </interactant>
    <interactant intactId="EBI-2798348">
        <id>Q30154</id>
        <label>HLA-DRB5</label>
    </interactant>
    <organismsDiffer>false</organismsDiffer>
    <experiments>2</experiments>
</comment>
<comment type="interaction">
    <interactant intactId="EBI-974488">
        <id>O14757</id>
    </interactant>
    <interactant intactId="EBI-352572">
        <id>P08238</id>
        <label>HSP90AB1</label>
    </interactant>
    <organismsDiffer>false</organismsDiffer>
    <experiments>3</experiments>
</comment>
<comment type="interaction">
    <interactant intactId="EBI-974488">
        <id>O14757</id>
    </interactant>
    <interactant intactId="EBI-297202">
        <id>Q06609</id>
        <label>RAD51</label>
    </interactant>
    <organismsDiffer>false</organismsDiffer>
    <experiments>3</experiments>
</comment>
<comment type="interaction">
    <interactant intactId="EBI-974488">
        <id>O14757</id>
    </interactant>
    <interactant intactId="EBI-491274">
        <id>P06400</id>
        <label>RB1</label>
    </interactant>
    <organismsDiffer>false</organismsDiffer>
    <experiments>3</experiments>
</comment>
<comment type="interaction">
    <interactant intactId="EBI-974488">
        <id>O14757</id>
    </interactant>
    <interactant intactId="EBI-9845742">
        <id>Q9HCE7-2</id>
        <label>SMURF1</label>
    </interactant>
    <organismsDiffer>false</organismsDiffer>
    <experiments>4</experiments>
</comment>
<comment type="interaction">
    <interactant intactId="EBI-974488">
        <id>O14757</id>
    </interactant>
    <interactant intactId="EBI-2212315">
        <id>Q9UNS1</id>
        <label>TIMELESS</label>
    </interactant>
    <organismsDiffer>false</organismsDiffer>
    <experiments>2</experiments>
</comment>
<comment type="interaction">
    <interactant intactId="EBI-974488">
        <id>O14757</id>
    </interactant>
    <interactant intactId="EBI-359815">
        <id>P31946</id>
        <label>YWHAB</label>
    </interactant>
    <organismsDiffer>false</organismsDiffer>
    <experiments>2</experiments>
</comment>
<comment type="interaction">
    <interactant intactId="EBI-974488">
        <id>O14757</id>
    </interactant>
    <interactant intactId="EBI-359832">
        <id>P61981</id>
        <label>YWHAG</label>
    </interactant>
    <organismsDiffer>false</organismsDiffer>
    <experiments>8</experiments>
</comment>
<comment type="subcellular location">
    <subcellularLocation>
        <location evidence="11 18 28 34 58">Nucleus</location>
    </subcellularLocation>
    <subcellularLocation>
        <location evidence="18 53 59">Chromosome</location>
    </subcellularLocation>
    <subcellularLocation>
        <location evidence="18">Cytoplasm</location>
    </subcellularLocation>
    <subcellularLocation>
        <location evidence="28">Cytoplasm</location>
        <location evidence="28">Cytoskeleton</location>
        <location evidence="28">Microtubule organizing center</location>
        <location evidence="28">Centrosome</location>
    </subcellularLocation>
    <text evidence="18 28 53">Nuclear export is mediated at least in part by XPO1/CRM1 (PubMed:12676962). Also localizes to the centrosome specifically during interphase, where it may protect centrosomal CDC2 kinase from inappropriate activation by cytoplasmic CDC25B (PubMed:15311285). Proteolytic cleavage at the C-terminus by SPRTN promotes removal from chromatin (PubMed:31316063).</text>
</comment>
<comment type="alternative products">
    <event type="alternative splicing"/>
    <isoform>
        <id>O14757-1</id>
        <name>1</name>
        <sequence type="displayed"/>
    </isoform>
    <isoform>
        <id>O14757-2</id>
        <name>2</name>
        <name evidence="63">Chk1-short</name>
        <name evidence="63">Chk1-S</name>
        <sequence type="described" ref="VSP_044008 VSP_044009"/>
    </isoform>
    <isoform>
        <id>O14757-3</id>
        <name>3</name>
        <sequence type="described" ref="VSP_045075"/>
    </isoform>
</comment>
<comment type="tissue specificity">
    <text evidence="58 59">Expressed ubiquitously with the most abundant expression in thymus, testis, small intestine and colon.</text>
</comment>
<comment type="domain">
    <text evidence="25">The autoinhibitory region (AIR) inhibits the activity of the kinase domain.</text>
</comment>
<comment type="PTM">
    <text evidence="2 7 8 13 14 15 16 17 18 23 25 27 30 32 33 36 48 52 53">Phosphorylated by ATR in a RAD17-dependent manner in response to ultraviolet irradiation and inhibition of DNA replication (PubMed:10859164, PubMed:11390642, PubMed:12446774, PubMed:12588868, PubMed:12676583, PubMed:12676925, PubMed:12676962, PubMed:14681223, PubMed:14988723, PubMed:15650047, PubMed:15707391, PubMed:15870257, PubMed:25083873, PubMed:31316063). Phosphorylated by ATM in response to ionizing irradiation (PubMed:12588868, PubMed:12676583). ATM and ATR can both phosphorylate Ser-317 and Ser-345 and this results in enhanced kinase activity (PubMed:11390642, PubMed:12446774, PubMed:12588868, PubMed:12660173, PubMed:12676583, PubMed:12676962, PubMed:14657349, PubMed:15665856, PubMed:15707391, PubMed:15870257, PubMed:25083873). Phosphorylation at Ser-345 induces a change in the conformation of the protein, activates the kinase activity and is a prerequisite for interaction with FBXO6 and subsequent ubiquitination at Lys-436 (PubMed:19716789). Phosphorylation at Ser-345 also increases binding to 14-3-3 proteins and promotes nuclear retention (PubMed:12676962). Conversely, dephosphorylation at Ser-345 by PPM1D may contribute to exit from checkpoint mediated cell cycle arrest (PubMed:15870257). Phosphorylation at Ser-280 by AKT1/PKB, may promote mono and/or diubiquitination. Also phosphorylated at undefined residues during mitotic arrest, resulting in decreased activity (By similarity).</text>
</comment>
<comment type="PTM">
    <text evidence="1 7 8 13 16 17 18 25 27 30 33 36 48">Ubiquitinated. Mono or diubiquitination promotes nuclear exclusion (By similarity). The activated form (phosphorylated on Ser-345) is polyubiquitinated at Lys-436 by some SCF-type E3 ubiquitin ligase complex containing FBXO6 promoting its degradation. Ubiquitination and degradation are required to terminate the checkpoint and ensure that activated CHEK1 does not accumulate as cells progress through S phase, when replication forks encounter transient impediments during normal DNA replication. 'Lys-63'-mediated ubiquitination by TRAF4 at Lys-132 activates cell cycle arrest and activation of DNA repair (PubMed:32357935).</text>
</comment>
<comment type="PTM">
    <text evidence="53">Proteolytically cleaved at the C-terminus by SPRTN during normal DNA replication, thereby promoting CHEK1 removal from chromatin and activating the protein kinase activity.</text>
</comment>
<comment type="disease" evidence="56 57">
    <disease id="DI-06797">
        <name>Oocyte/zygote/embryo maturation arrest 21</name>
        <acronym>OZEMA21</acronym>
        <description>An autosomal dominant, female infertility disorder characterized by zygote development arrest due to failure of pronuclei fusion.</description>
        <dbReference type="MIM" id="620610"/>
    </disease>
    <text>The disease is caused by variants affecting the gene represented in this entry.</text>
</comment>
<comment type="similarity">
    <text evidence="64">Belongs to the protein kinase superfamily. CAMK Ser/Thr protein kinase family. NIM1 subfamily.</text>
</comment>
<reference key="1">
    <citation type="journal article" date="1997" name="Science">
        <title>Conservation of the Chk1 checkpoint pathway in mammals: linkage of DNA damage to Cdk regulation through Cdc25.</title>
        <authorList>
            <person name="Sanchez Y."/>
            <person name="Wong C."/>
            <person name="Thoma R.S."/>
            <person name="Richman R."/>
            <person name="Wu Z."/>
            <person name="Piwnica-Worms H."/>
            <person name="Elledge S.J."/>
        </authorList>
    </citation>
    <scope>NUCLEOTIDE SEQUENCE [MRNA] (ISOFORM 1)</scope>
    <scope>FUNCTION IN PHOSPHORYLATION OF CDC25A; CDC25B AND CDC25C</scope>
    <scope>CATALYTIC ACTIVITY</scope>
    <scope>INTERACTION WITH CDC25A; CDC25B AND CDC25C</scope>
    <scope>SUBCELLULAR LOCATION</scope>
    <scope>TISSUE SPECIFICITY</scope>
    <scope>MUTAGENESIS OF ASP-130</scope>
    <scope>VARIANT VAL-471</scope>
</reference>
<reference key="2">
    <citation type="journal article" date="1997" name="Curr. Biol.">
        <title>Atm-dependent interactions of a mammalian chk1 homolog with meiotic chromosomes.</title>
        <authorList>
            <person name="Flaggs G."/>
            <person name="Plug A.W."/>
            <person name="Dunks K.M."/>
            <person name="Mundt K.E."/>
            <person name="Ford J.C."/>
            <person name="Quiggle M.R.E."/>
            <person name="Taylor E.M."/>
            <person name="Westphal C.H."/>
            <person name="Ashley T."/>
            <person name="Hoekstra M.F."/>
            <person name="Carr A.M."/>
        </authorList>
    </citation>
    <scope>NUCLEOTIDE SEQUENCE [MRNA] (ISOFORM 1)</scope>
    <scope>TISSUE SPECIFICITY</scope>
    <scope>SUBCELLULAR LOCATION</scope>
    <scope>VARIANT VAL-471</scope>
</reference>
<reference key="3">
    <citation type="journal article" date="2000" name="Int. J. Oncol.">
        <title>Analysis of the candidate target genes for mutation in microsatellite instability-positive cancers of the colorectum, stomach, and endometrium.</title>
        <authorList>
            <person name="Semba S."/>
            <person name="Ouyang H."/>
            <person name="Han S.-Y."/>
            <person name="Kato Y."/>
            <person name="Horii A."/>
        </authorList>
    </citation>
    <scope>NUCLEOTIDE SEQUENCE [GENOMIC DNA]</scope>
    <scope>VARIANT VAL-471</scope>
</reference>
<reference key="4">
    <citation type="journal article" date="2012" name="Proc. Natl. Acad. Sci. U.S.A.">
        <title>Checkpoint kinase 1 (Chk1)-short is a splice variant and endogenous inhibitor of Chk1 that regulates cell cycle and DNA damage checkpoints.</title>
        <authorList>
            <person name="Pabla N."/>
            <person name="Bhatt K."/>
            <person name="Dong Z."/>
        </authorList>
    </citation>
    <scope>NUCLEOTIDE SEQUENCE [MRNA] (ISOFORM 2)</scope>
    <scope>FUNCTION (ISOFORM 2)</scope>
    <scope>ALTERNATIVE SPLICING</scope>
    <source>
        <tissue>Fetal thymus</tissue>
    </source>
</reference>
<reference key="5">
    <citation type="journal article" date="2004" name="Nat. Genet.">
        <title>Complete sequencing and characterization of 21,243 full-length human cDNAs.</title>
        <authorList>
            <person name="Ota T."/>
            <person name="Suzuki Y."/>
            <person name="Nishikawa T."/>
            <person name="Otsuki T."/>
            <person name="Sugiyama T."/>
            <person name="Irie R."/>
            <person name="Wakamatsu A."/>
            <person name="Hayashi K."/>
            <person name="Sato H."/>
            <person name="Nagai K."/>
            <person name="Kimura K."/>
            <person name="Makita H."/>
            <person name="Sekine M."/>
            <person name="Obayashi M."/>
            <person name="Nishi T."/>
            <person name="Shibahara T."/>
            <person name="Tanaka T."/>
            <person name="Ishii S."/>
            <person name="Yamamoto J."/>
            <person name="Saito K."/>
            <person name="Kawai Y."/>
            <person name="Isono Y."/>
            <person name="Nakamura Y."/>
            <person name="Nagahari K."/>
            <person name="Murakami K."/>
            <person name="Yasuda T."/>
            <person name="Iwayanagi T."/>
            <person name="Wagatsuma M."/>
            <person name="Shiratori A."/>
            <person name="Sudo H."/>
            <person name="Hosoiri T."/>
            <person name="Kaku Y."/>
            <person name="Kodaira H."/>
            <person name="Kondo H."/>
            <person name="Sugawara M."/>
            <person name="Takahashi M."/>
            <person name="Kanda K."/>
            <person name="Yokoi T."/>
            <person name="Furuya T."/>
            <person name="Kikkawa E."/>
            <person name="Omura Y."/>
            <person name="Abe K."/>
            <person name="Kamihara K."/>
            <person name="Katsuta N."/>
            <person name="Sato K."/>
            <person name="Tanikawa M."/>
            <person name="Yamazaki M."/>
            <person name="Ninomiya K."/>
            <person name="Ishibashi T."/>
            <person name="Yamashita H."/>
            <person name="Murakawa K."/>
            <person name="Fujimori K."/>
            <person name="Tanai H."/>
            <person name="Kimata M."/>
            <person name="Watanabe M."/>
            <person name="Hiraoka S."/>
            <person name="Chiba Y."/>
            <person name="Ishida S."/>
            <person name="Ono Y."/>
            <person name="Takiguchi S."/>
            <person name="Watanabe S."/>
            <person name="Yosida M."/>
            <person name="Hotuta T."/>
            <person name="Kusano J."/>
            <person name="Kanehori K."/>
            <person name="Takahashi-Fujii A."/>
            <person name="Hara H."/>
            <person name="Tanase T.-O."/>
            <person name="Nomura Y."/>
            <person name="Togiya S."/>
            <person name="Komai F."/>
            <person name="Hara R."/>
            <person name="Takeuchi K."/>
            <person name="Arita M."/>
            <person name="Imose N."/>
            <person name="Musashino K."/>
            <person name="Yuuki H."/>
            <person name="Oshima A."/>
            <person name="Sasaki N."/>
            <person name="Aotsuka S."/>
            <person name="Yoshikawa Y."/>
            <person name="Matsunawa H."/>
            <person name="Ichihara T."/>
            <person name="Shiohata N."/>
            <person name="Sano S."/>
            <person name="Moriya S."/>
            <person name="Momiyama H."/>
            <person name="Satoh N."/>
            <person name="Takami S."/>
            <person name="Terashima Y."/>
            <person name="Suzuki O."/>
            <person name="Nakagawa S."/>
            <person name="Senoh A."/>
            <person name="Mizoguchi H."/>
            <person name="Goto Y."/>
            <person name="Shimizu F."/>
            <person name="Wakebe H."/>
            <person name="Hishigaki H."/>
            <person name="Watanabe T."/>
            <person name="Sugiyama A."/>
            <person name="Takemoto M."/>
            <person name="Kawakami B."/>
            <person name="Yamazaki M."/>
            <person name="Watanabe K."/>
            <person name="Kumagai A."/>
            <person name="Itakura S."/>
            <person name="Fukuzumi Y."/>
            <person name="Fujimori Y."/>
            <person name="Komiyama M."/>
            <person name="Tashiro H."/>
            <person name="Tanigami A."/>
            <person name="Fujiwara T."/>
            <person name="Ono T."/>
            <person name="Yamada K."/>
            <person name="Fujii Y."/>
            <person name="Ozaki K."/>
            <person name="Hirao M."/>
            <person name="Ohmori Y."/>
            <person name="Kawabata A."/>
            <person name="Hikiji T."/>
            <person name="Kobatake N."/>
            <person name="Inagaki H."/>
            <person name="Ikema Y."/>
            <person name="Okamoto S."/>
            <person name="Okitani R."/>
            <person name="Kawakami T."/>
            <person name="Noguchi S."/>
            <person name="Itoh T."/>
            <person name="Shigeta K."/>
            <person name="Senba T."/>
            <person name="Matsumura K."/>
            <person name="Nakajima Y."/>
            <person name="Mizuno T."/>
            <person name="Morinaga M."/>
            <person name="Sasaki M."/>
            <person name="Togashi T."/>
            <person name="Oyama M."/>
            <person name="Hata H."/>
            <person name="Watanabe M."/>
            <person name="Komatsu T."/>
            <person name="Mizushima-Sugano J."/>
            <person name="Satoh T."/>
            <person name="Shirai Y."/>
            <person name="Takahashi Y."/>
            <person name="Nakagawa K."/>
            <person name="Okumura K."/>
            <person name="Nagase T."/>
            <person name="Nomura N."/>
            <person name="Kikuchi H."/>
            <person name="Masuho Y."/>
            <person name="Yamashita R."/>
            <person name="Nakai K."/>
            <person name="Yada T."/>
            <person name="Nakamura Y."/>
            <person name="Ohara O."/>
            <person name="Isogai T."/>
            <person name="Sugano S."/>
        </authorList>
    </citation>
    <scope>NUCLEOTIDE SEQUENCE [LARGE SCALE MRNA] (ISOFORMS 1; 2 AND 3)</scope>
    <scope>VARIANT VAL-471</scope>
    <source>
        <tissue>Brain</tissue>
        <tissue>Testis</tissue>
    </source>
</reference>
<reference key="6">
    <citation type="submission" date="2002-07" db="EMBL/GenBank/DDBJ databases">
        <authorList>
            <consortium name="NIEHS SNPs program"/>
        </authorList>
    </citation>
    <scope>NUCLEOTIDE SEQUENCE [GENOMIC DNA]</scope>
    <scope>VARIANTS GLN-156 AND VAL-471</scope>
</reference>
<reference key="7">
    <citation type="journal article" date="2008" name="Nat. Methods">
        <title>Human protein factory for converting the transcriptome into an in vitro-expressed proteome.</title>
        <authorList>
            <person name="Goshima N."/>
            <person name="Kawamura Y."/>
            <person name="Fukumoto A."/>
            <person name="Miura A."/>
            <person name="Honma R."/>
            <person name="Satoh R."/>
            <person name="Wakamatsu A."/>
            <person name="Yamamoto J."/>
            <person name="Kimura K."/>
            <person name="Nishikawa T."/>
            <person name="Andoh T."/>
            <person name="Iida Y."/>
            <person name="Ishikawa K."/>
            <person name="Ito E."/>
            <person name="Kagawa N."/>
            <person name="Kaminaga C."/>
            <person name="Kanehori K."/>
            <person name="Kawakami B."/>
            <person name="Kenmochi K."/>
            <person name="Kimura R."/>
            <person name="Kobayashi M."/>
            <person name="Kuroita T."/>
            <person name="Kuwayama H."/>
            <person name="Maruyama Y."/>
            <person name="Matsuo K."/>
            <person name="Minami K."/>
            <person name="Mitsubori M."/>
            <person name="Mori M."/>
            <person name="Morishita R."/>
            <person name="Murase A."/>
            <person name="Nishikawa A."/>
            <person name="Nishikawa S."/>
            <person name="Okamoto T."/>
            <person name="Sakagami N."/>
            <person name="Sakamoto Y."/>
            <person name="Sasaki Y."/>
            <person name="Seki T."/>
            <person name="Sono S."/>
            <person name="Sugiyama A."/>
            <person name="Sumiya T."/>
            <person name="Takayama T."/>
            <person name="Takayama Y."/>
            <person name="Takeda H."/>
            <person name="Togashi T."/>
            <person name="Yahata K."/>
            <person name="Yamada H."/>
            <person name="Yanagisawa Y."/>
            <person name="Endo Y."/>
            <person name="Imamoto F."/>
            <person name="Kisu Y."/>
            <person name="Tanaka S."/>
            <person name="Isogai T."/>
            <person name="Imai J."/>
            <person name="Watanabe S."/>
            <person name="Nomura N."/>
        </authorList>
    </citation>
    <scope>NUCLEOTIDE SEQUENCE [LARGE SCALE MRNA] (ISOFORM 1)</scope>
    <scope>VARIANT VAL-471</scope>
</reference>
<reference key="8">
    <citation type="journal article" date="2006" name="Nature">
        <title>Human chromosome 11 DNA sequence and analysis including novel gene identification.</title>
        <authorList>
            <person name="Taylor T.D."/>
            <person name="Noguchi H."/>
            <person name="Totoki Y."/>
            <person name="Toyoda A."/>
            <person name="Kuroki Y."/>
            <person name="Dewar K."/>
            <person name="Lloyd C."/>
            <person name="Itoh T."/>
            <person name="Takeda T."/>
            <person name="Kim D.-W."/>
            <person name="She X."/>
            <person name="Barlow K.F."/>
            <person name="Bloom T."/>
            <person name="Bruford E."/>
            <person name="Chang J.L."/>
            <person name="Cuomo C.A."/>
            <person name="Eichler E."/>
            <person name="FitzGerald M.G."/>
            <person name="Jaffe D.B."/>
            <person name="LaButti K."/>
            <person name="Nicol R."/>
            <person name="Park H.-S."/>
            <person name="Seaman C."/>
            <person name="Sougnez C."/>
            <person name="Yang X."/>
            <person name="Zimmer A.R."/>
            <person name="Zody M.C."/>
            <person name="Birren B.W."/>
            <person name="Nusbaum C."/>
            <person name="Fujiyama A."/>
            <person name="Hattori M."/>
            <person name="Rogers J."/>
            <person name="Lander E.S."/>
            <person name="Sakaki Y."/>
        </authorList>
    </citation>
    <scope>NUCLEOTIDE SEQUENCE [LARGE SCALE GENOMIC DNA]</scope>
</reference>
<reference key="9">
    <citation type="submission" date="2005-07" db="EMBL/GenBank/DDBJ databases">
        <authorList>
            <person name="Mural R.J."/>
            <person name="Istrail S."/>
            <person name="Sutton G.G."/>
            <person name="Florea L."/>
            <person name="Halpern A.L."/>
            <person name="Mobarry C.M."/>
            <person name="Lippert R."/>
            <person name="Walenz B."/>
            <person name="Shatkay H."/>
            <person name="Dew I."/>
            <person name="Miller J.R."/>
            <person name="Flanigan M.J."/>
            <person name="Edwards N.J."/>
            <person name="Bolanos R."/>
            <person name="Fasulo D."/>
            <person name="Halldorsson B.V."/>
            <person name="Hannenhalli S."/>
            <person name="Turner R."/>
            <person name="Yooseph S."/>
            <person name="Lu F."/>
            <person name="Nusskern D.R."/>
            <person name="Shue B.C."/>
            <person name="Zheng X.H."/>
            <person name="Zhong F."/>
            <person name="Delcher A.L."/>
            <person name="Huson D.H."/>
            <person name="Kravitz S.A."/>
            <person name="Mouchard L."/>
            <person name="Reinert K."/>
            <person name="Remington K.A."/>
            <person name="Clark A.G."/>
            <person name="Waterman M.S."/>
            <person name="Eichler E.E."/>
            <person name="Adams M.D."/>
            <person name="Hunkapiller M.W."/>
            <person name="Myers E.W."/>
            <person name="Venter J.C."/>
        </authorList>
    </citation>
    <scope>NUCLEOTIDE SEQUENCE [LARGE SCALE GENOMIC DNA]</scope>
    <scope>VARIANT VAL-471</scope>
</reference>
<reference key="10">
    <citation type="journal article" date="2004" name="Genome Res.">
        <title>The status, quality, and expansion of the NIH full-length cDNA project: the Mammalian Gene Collection (MGC).</title>
        <authorList>
            <consortium name="The MGC Project Team"/>
        </authorList>
    </citation>
    <scope>NUCLEOTIDE SEQUENCE [LARGE SCALE MRNA] (ISOFORM 1)</scope>
    <scope>VARIANT VAL-471</scope>
    <source>
        <tissue>Bone marrow</tissue>
        <tissue>Muscle</tissue>
    </source>
</reference>
<reference key="11">
    <citation type="journal article" date="2000" name="Genes Dev.">
        <title>The human homologs of checkpoint kinases Chk1 and Cds1 (Chk2) phosphorylate p53 at multiple DNA damage-inducible sites.</title>
        <authorList>
            <person name="Shieh S.-Y."/>
            <person name="Ahn J."/>
            <person name="Tamai K."/>
            <person name="Taya Y."/>
            <person name="Prives C."/>
        </authorList>
    </citation>
    <scope>FUNCTION IN PHOSPHORYLATION OF TP53</scope>
    <scope>CATALYTIC ACTIVITY</scope>
    <scope>MUTAGENESIS OF ASP-130</scope>
</reference>
<reference key="12">
    <citation type="journal article" date="2000" name="Genes Dev.">
        <authorList>
            <person name="Shieh S.-Y."/>
            <person name="Ahn J."/>
            <person name="Tamai K."/>
            <person name="Taya Y."/>
            <person name="Prives C."/>
        </authorList>
    </citation>
    <scope>ERRATUM OF PUBMED:10673501</scope>
</reference>
<reference key="13">
    <citation type="journal article" date="2000" name="Genes Dev.">
        <title>Chk1 is an essential kinase that is regulated by Atr and required for the G(2)/M DNA damage checkpoint.</title>
        <authorList>
            <person name="Liu Q."/>
            <person name="Guntuku S."/>
            <person name="Cui X.-S."/>
            <person name="Matsuoka S."/>
            <person name="Cortez D."/>
            <person name="Tamai K."/>
            <person name="Luo G."/>
            <person name="Carattini-Rivera S."/>
            <person name="DeMayo F."/>
            <person name="Bradley A."/>
            <person name="Donehower L.A."/>
            <person name="Elledge S.J."/>
        </authorList>
    </citation>
    <scope>PHOSPHORYLATION AT SER-345 BY ATR</scope>
</reference>
<reference key="14">
    <citation type="journal article" date="2001" name="J. Cell Biol.">
        <title>Activation of mammalian Chk1 during DNA replication arrest: a role for Chk1 in the intra-S phase checkpoint monitoring replication origin firing.</title>
        <authorList>
            <person name="Feijoo C."/>
            <person name="Hall-Jackson C."/>
            <person name="Wu R."/>
            <person name="Jenkins D."/>
            <person name="Leitch J."/>
            <person name="Gilbert D.M."/>
            <person name="Smythe C."/>
        </authorList>
    </citation>
    <scope>FUNCTION IN DNA REPLICATION</scope>
    <scope>PHOSPHORYLATION BY ATR</scope>
    <scope>MUTAGENESIS OF ASP-130</scope>
</reference>
<reference key="15">
    <citation type="journal article" date="2001" name="Mol. Cell. Biol.">
        <title>ATR-mediated checkpoint pathways regulate phosphorylation and activation of human Chk1.</title>
        <authorList>
            <person name="Zhao H."/>
            <person name="Piwnica-Worms H."/>
        </authorList>
    </citation>
    <scope>PHOSPHORYLATION AT SER-317 AND SER-345</scope>
    <scope>MUTAGENESIS OF ASP-130; SER-317; SER-345; SER-357; SER-366 AND SER-468</scope>
</reference>
<reference key="16">
    <citation type="journal article" date="2002" name="J. Biol. Chem.">
        <title>Determination of substrate motifs for human Chk1 and hCds1/Chk2 by the oriented peptide library approach.</title>
        <authorList>
            <person name="O'Neill T."/>
            <person name="Giarratani L."/>
            <person name="Chen P."/>
            <person name="Iyer L."/>
            <person name="Lee C.-H."/>
            <person name="Bobiak M."/>
            <person name="Kanai F."/>
            <person name="Zhou B.-B."/>
            <person name="Chung J.H."/>
            <person name="Rathbun G.A."/>
        </authorList>
    </citation>
    <scope>SUBSTRATE SPECIFICITY</scope>
    <scope>MUTAGENESIS OF ASP-130</scope>
</reference>
<reference key="17">
    <citation type="journal article" date="2002" name="J. Biol. Chem.">
        <authorList>
            <person name="O'Neill T."/>
            <person name="Giarratani L."/>
            <person name="Chen P."/>
            <person name="Iyer L."/>
            <person name="Lee C.-H."/>
            <person name="Bobiak M."/>
            <person name="Kanai F."/>
            <person name="Zhou B.-B."/>
            <person name="Chung J.H."/>
            <person name="Rathbun G.A."/>
        </authorList>
    </citation>
    <scope>ERRATUM OF PUBMED:11821419</scope>
</reference>
<reference key="18">
    <citation type="journal article" date="2002" name="Mol. Cell. Biol.">
        <title>An ATR- and Chk1-dependent S checkpoint inhibits replicon initiation following UVC-induced DNA damage.</title>
        <authorList>
            <person name="Heffernan T.P."/>
            <person name="Simpson D.A."/>
            <person name="Frank A.R."/>
            <person name="Heinloth A.N."/>
            <person name="Paules R.S."/>
            <person name="Cordeiro-Stone M."/>
            <person name="Kaufmann W.K."/>
        </authorList>
    </citation>
    <scope>FUNCTION IN DNA DAMAGE RESPONSE</scope>
    <scope>PHOSPHORYLATION AT SER-317 AND SER-345</scope>
    <scope>MUTAGENESIS OF LYS-38</scope>
</reference>
<reference key="19">
    <citation type="journal article" date="2002" name="Nat. Genet.">
        <title>BRCA1 regulates the G2/M checkpoint by activating Chk1 kinase upon DNA damage.</title>
        <authorList>
            <person name="Yarden R.I."/>
            <person name="Pardo-Reoyo S."/>
            <person name="Sgagias M."/>
            <person name="Cowan K.H."/>
            <person name="Brody L.C."/>
        </authorList>
    </citation>
    <scope>SUBCELLULAR LOCATION</scope>
    <scope>ACTIVITY REGULATION</scope>
    <scope>INTERACTION WITH BRCA1</scope>
</reference>
<reference key="20">
    <citation type="journal article" date="2002" name="Proc. Natl. Acad. Sci. U.S.A.">
        <title>Disruption of the checkpoint kinase 1/cell division cycle 25A pathway abrogates ionizing radiation-induced S and G2 checkpoints.</title>
        <authorList>
            <person name="Zhao H."/>
            <person name="Watkins J.L."/>
            <person name="Piwnica-Worms H."/>
        </authorList>
    </citation>
    <scope>FUNCTION IN DNA DAMAGE RESPONSE</scope>
</reference>
<reference key="21">
    <citation type="journal article" date="2003" name="Cancer Cell">
        <title>Chk1 regulates the S phase checkpoint by coupling the physiological turnover and ionizing radiation-induced accelerated proteolysis of Cdc25A.</title>
        <authorList>
            <person name="Soerensen C.S."/>
            <person name="Syljuaesen R.G."/>
            <person name="Falck J."/>
            <person name="Schroeder T."/>
            <person name="Roennstrand L."/>
            <person name="Khanna K.K."/>
            <person name="Zhou B.-B."/>
            <person name="Bartek J."/>
            <person name="Lukas J."/>
        </authorList>
    </citation>
    <scope>FUNCTION IN CDC25A TURNOVER</scope>
    <scope>PHOSPHORYLATION AT SER-317 AND SER-345</scope>
    <scope>MUTAGENESIS OF SER-317 AND SER-345</scope>
</reference>
<reference key="22">
    <citation type="journal article" date="2003" name="EMBO J.">
        <title>Human tousled like kinases are targeted by an ATM- and Chk1-dependent DNA damage checkpoint.</title>
        <authorList>
            <person name="Groth A."/>
            <person name="Lukas J."/>
            <person name="Nigg E.A."/>
            <person name="Sillje H.H.W."/>
            <person name="Wernstedt C."/>
            <person name="Bartek J."/>
            <person name="Hansen K."/>
        </authorList>
    </citation>
    <scope>FUNCTION IN PHOSPHORYLATION OF TLK1</scope>
    <scope>CATALYTIC ACTIVITY</scope>
    <scope>INTERACTION WITH TLK1</scope>
    <scope>PHOSPHORYLATION AT SER-317</scope>
</reference>
<reference key="23">
    <citation type="journal article" date="2003" name="Genes Dev.">
        <title>SCFbeta-TRCP links Chk1 signaling to degradation of the Cdc25A protein phosphatase.</title>
        <authorList>
            <person name="Jin J."/>
            <person name="Shirogane T."/>
            <person name="Xu L."/>
            <person name="Nalepa G."/>
            <person name="Qin J."/>
            <person name="Elledge S.J."/>
            <person name="Harper J.W."/>
        </authorList>
    </citation>
    <scope>FUNCTION IN CDC25A TURNOVER</scope>
    <scope>MUTAGENESIS OF ASP-130</scope>
</reference>
<reference key="24">
    <citation type="journal article" date="2003" name="J. Biol. Chem.">
        <title>Ataxia-telangiectasia-mutated (ATM) and NBS1-dependent phosphorylation of Chk1 on ser-317 in response to ionizing radiation.</title>
        <authorList>
            <person name="Gatei M."/>
            <person name="Sloper K."/>
            <person name="Soerensen C."/>
            <person name="Syljuaesen R."/>
            <person name="Falck J."/>
            <person name="Hobson K."/>
            <person name="Savage K."/>
            <person name="Lukas J."/>
            <person name="Zhou B.-B."/>
            <person name="Bartek J."/>
            <person name="Khanna K.K."/>
        </authorList>
    </citation>
    <scope>PHOSPHORYLATION AT SER-317</scope>
    <scope>MUTAGENESIS OF ASP-130; SER-317 AND SER-345</scope>
</reference>
<reference key="25">
    <citation type="journal article" date="2003" name="J. Biol. Chem.">
        <title>Chk1 mediates S and G2 arrests through Cdc25A degradation in response to DNA-damaging agents.</title>
        <authorList>
            <person name="Xiao Z."/>
            <person name="Chen Z."/>
            <person name="Gunasekera A.H."/>
            <person name="Sowin T.J."/>
            <person name="Rosenberg S.H."/>
            <person name="Fesik S."/>
            <person name="Zhang H."/>
        </authorList>
    </citation>
    <scope>FUNCTION IN CDC25A TURNOVER</scope>
    <scope>PHOSPHORYLATION AT SER-345</scope>
</reference>
<reference key="26">
    <citation type="journal article" date="2003" name="J. Biol. Chem.">
        <title>Regulation of Chk1 includes chromatin association and 14-3-3 binding following phosphorylation on ser-345.</title>
        <authorList>
            <person name="Jiang K."/>
            <person name="Pereira E."/>
            <person name="Maxfield M."/>
            <person name="Russell B."/>
            <person name="Goudelock D.M."/>
            <person name="Sanchez Y."/>
        </authorList>
    </citation>
    <scope>INTERACTION WITH YWHAZ AND XPO1</scope>
    <scope>SUBCELLULAR LOCATION</scope>
    <scope>ASSOCIATION WITH CHROMATIN</scope>
    <scope>PHOSPHORYLATION AT SER-317 AND SER-345</scope>
    <scope>MUTAGENESIS OF SER-317; PHE-344; SER-345 AND MET-353</scope>
</reference>
<reference key="27">
    <citation type="journal article" date="2003" name="J. Biol. Chem.">
        <title>Phosphorylation at serine 75 is required for UV-mediated degradation of human Cdc25A phosphatase at the S-phase checkpoint.</title>
        <authorList>
            <person name="Hassepass I."/>
            <person name="Voit R."/>
            <person name="Hoffmann I."/>
        </authorList>
    </citation>
    <scope>FUNCTION IN CDC25A TURNOVER</scope>
</reference>
<reference key="28">
    <citation type="journal article" date="2003" name="J. Biol. Chem.">
        <title>Human claspin is required for replication checkpoint control.</title>
        <authorList>
            <person name="Chini C.C.S."/>
            <person name="Chen J."/>
        </authorList>
    </citation>
    <scope>INTERACTION WITH CLSPN</scope>
    <scope>ACTIVITY REGULATION</scope>
</reference>
<reference key="29">
    <citation type="journal article" date="2003" name="Mol. Cell. Biol.">
        <title>Chk1 kinase negatively regulates mitotic function of Cdc25A phosphatase through 14-3-3 binding.</title>
        <authorList>
            <person name="Chen M.-S."/>
            <person name="Ryan C.E."/>
            <person name="Piwnica-Worms H."/>
        </authorList>
    </citation>
    <scope>FUNCTION IN MITOSIS</scope>
    <scope>CATALYTIC ACTIVITY</scope>
    <scope>FUNCTION IN PHOSPHORYLATION OF CDC25A</scope>
</reference>
<reference key="30">
    <citation type="journal article" date="2003" name="Oncogene">
        <title>Suppression of tousled-like kinase activity after DNA damage or replication block requires ATM, NBS1 and Chk1.</title>
        <authorList>
            <person name="Krause D.R."/>
            <person name="Jonnalagadda J.C."/>
            <person name="Gatei M.H."/>
            <person name="Sillje H.H.W."/>
            <person name="Zhou B.-B."/>
            <person name="Nigg E.A."/>
            <person name="Khanna K."/>
        </authorList>
    </citation>
    <scope>REGULATION OF TLK1</scope>
</reference>
<reference key="31">
    <citation type="journal article" date="2003" name="Proc. Natl. Acad. Sci. U.S.A.">
        <title>MSH2 and ATR form a signaling module and regulate two branches of the damage response to DNA methylation.</title>
        <authorList>
            <person name="Wang Y."/>
            <person name="Qin J."/>
        </authorList>
    </citation>
    <scope>PHOSPHORYLATION AT SER-317</scope>
</reference>
<reference key="32">
    <citation type="journal article" date="2004" name="EMBO J.">
        <title>The DNA crosslink-induced S-phase checkpoint depends on ATR-CHK1 and ATR-NBS1-FANCD2 pathways.</title>
        <authorList>
            <person name="Pichierri P."/>
            <person name="Rosselli F."/>
        </authorList>
    </citation>
    <scope>FUNCTION</scope>
    <scope>PHOSPHORYLATION AT SER-345</scope>
</reference>
<reference key="33">
    <citation type="journal article" date="2004" name="J. Biol. Chem.">
        <title>Differential mode of regulation of the checkpoint kinases CHK1 and CHK2 by their regulatory domains.</title>
        <authorList>
            <person name="Ng C.-P."/>
            <person name="Lee H.C."/>
            <person name="Ho C.W."/>
            <person name="Arooz T."/>
            <person name="Siu W.Y."/>
            <person name="Lau A."/>
            <person name="Poon R.Y.C."/>
        </authorList>
    </citation>
    <scope>DOMAIN</scope>
    <scope>MITOTIC PHOSPHORYLATION</scope>
    <scope>PHOSPHORYLATION AT SER-345</scope>
    <scope>MUTAGENESIS OF LYS-38</scope>
</reference>
<reference key="34">
    <citation type="journal article" date="2004" name="Nat. Cell Biol.">
        <title>Centrosome-associated Chk1 prevents premature activation of cyclin-B-Cdk1 kinase.</title>
        <authorList>
            <person name="Kraemer A."/>
            <person name="Mailand N."/>
            <person name="Lukas C."/>
            <person name="Syljuaesen R.G."/>
            <person name="Wilkinson C.J."/>
            <person name="Nigg E.A."/>
            <person name="Bartek J."/>
            <person name="Lukas J."/>
        </authorList>
    </citation>
    <scope>FUNCTION IN MITOSIS</scope>
    <scope>SUBCELLULAR LOCATION</scope>
    <scope>MUTAGENESIS OF ASP-130</scope>
</reference>
<reference key="35">
    <citation type="journal article" date="2005" name="Biochem. J.">
        <title>DNA-dependent phosphorylation of Chk1 and claspin in a human cell-free system.</title>
        <authorList>
            <person name="Clarke C.A.L."/>
            <person name="Clarke P.R."/>
        </authorList>
    </citation>
    <scope>INTERACTION WITH CLSPN</scope>
    <scope>PHOSPHORYLATION AT SER-296; SER-317 AND SER-345</scope>
</reference>
<reference key="36">
    <citation type="journal article" date="2005" name="Cancer Cell">
        <title>Lack of PTEN sequesters CHK1 and initiates genetic instability.</title>
        <authorList>
            <person name="Puc J."/>
            <person name="Keniry M."/>
            <person name="Li H.S."/>
            <person name="Pandita T.K."/>
            <person name="Choudhury A.D."/>
            <person name="Memeo L."/>
            <person name="Mansukhani M."/>
            <person name="Murty V.V.V.S."/>
            <person name="Gaciong Z."/>
            <person name="Meek S.E.M."/>
            <person name="Piwnica-Worms H."/>
            <person name="Hibshoosh H."/>
            <person name="Parsons R."/>
        </authorList>
    </citation>
    <scope>SUBCELLULAR LOCATION</scope>
</reference>
<reference key="37">
    <citation type="journal article" date="2005" name="Genes Dev.">
        <title>PPM1D dephosphorylates Chk1 and p53 and abrogates cell cycle checkpoints.</title>
        <authorList>
            <person name="Lu X."/>
            <person name="Nannenga B."/>
            <person name="Donehower L.A."/>
        </authorList>
    </citation>
    <scope>INTERACTION WITH PPM1D</scope>
    <scope>PHOSPHORYLATION AT SER-317 AND SER-345</scope>
    <scope>DEPHOSPHORYLATION BY PPM1D</scope>
</reference>
<reference key="38">
    <citation type="journal article" date="2005" name="Mol. Biol. Cell">
        <title>p53 C-terminal phosphorylation by CHK1 and CHK2 participates in the regulation of DNA-damage-induced C-terminal acetylation.</title>
        <authorList>
            <person name="Ou Y.-H."/>
            <person name="Chung P.-H."/>
            <person name="Sun T.-P."/>
            <person name="Shieh S.-Y."/>
        </authorList>
    </citation>
    <scope>FUNCTION IN PHOSPHORYLATION OF TP53</scope>
    <scope>FUNCTION IN TP53-DEPENDENT TRANSCRIPTION</scope>
    <scope>CATALYTIC ACTIVITY</scope>
</reference>
<reference key="39">
    <citation type="journal article" date="2005" name="Mol. Cell. Biol.">
        <title>Coupling of human circadian and cell cycles by the timeless protein.</title>
        <authorList>
            <person name="Uensal-Kacmaz K."/>
            <person name="Mullen T.E."/>
            <person name="Kaufmann W.K."/>
            <person name="Sancar A."/>
        </authorList>
    </citation>
    <scope>INTERACTION WITH TIMELESS</scope>
</reference>
<reference key="40">
    <citation type="journal article" date="2005" name="Nat. Cell Biol.">
        <title>The cell-cycle checkpoint kinase Chk1 is required for mammalian homologous recombination repair.</title>
        <authorList>
            <person name="Soerensen C.S."/>
            <person name="Hansen L.T."/>
            <person name="Dziegielewski J."/>
            <person name="Syljuaesen R.G."/>
            <person name="Lundin C."/>
            <person name="Bartek J."/>
            <person name="Helleday T."/>
        </authorList>
    </citation>
    <scope>FUNCTION IN HOMOLOGOUS RECOMBINATION REPAIR</scope>
    <scope>FUNCTION IN PHOSPHORYLATION OF RAD51</scope>
    <scope>CATALYTIC ACTIVITY</scope>
    <scope>INTERACTION WITH RAD51</scope>
    <scope>MUTAGENESIS OF SER-317 AND SER-345</scope>
</reference>
<reference key="41">
    <citation type="journal article" date="2005" name="Proc. Natl. Acad. Sci. U.S.A.">
        <title>DNA damage-induced mitotic catastrophe is mediated by the Chk1-dependent mitotic exit DNA damage checkpoint.</title>
        <authorList>
            <person name="Huang X."/>
            <person name="Tran T."/>
            <person name="Zhang L."/>
            <person name="Hatcher R."/>
            <person name="Zhang P."/>
        </authorList>
    </citation>
    <scope>FUNCTION IN MITOTIC EXIT</scope>
    <scope>PHOSPHORYLATION AT SER-345</scope>
</reference>
<reference key="42">
    <citation type="journal article" date="2006" name="EMBO J.">
        <title>14-3-3gamma binds to MDMX that is phosphorylated by UV-activated Chk1, resulting in p53 activation.</title>
        <authorList>
            <person name="Jin Y."/>
            <person name="Dai M.S."/>
            <person name="Lu S.Z."/>
            <person name="Xu Y."/>
            <person name="Luo Z."/>
            <person name="Zhao Y."/>
            <person name="Lu H."/>
        </authorList>
    </citation>
    <scope>FUNCTION IN TP53 ACTIVATION</scope>
    <scope>FUNCTION IN PHOSPHORYLATION OF MDM4</scope>
    <scope>CATALYTIC ACTIVITY</scope>
</reference>
<reference key="43">
    <citation type="journal article" date="2006" name="J. Biol. Chem.">
        <title>Repeated phosphopeptide motifs in human Claspin are phosphorylated by Chk1 and mediate Claspin function.</title>
        <authorList>
            <person name="Chini C.C."/>
            <person name="Chen J."/>
        </authorList>
    </citation>
    <scope>FUNCTION IN PHOSPHORYLATION OF CLSPN</scope>
    <scope>INTERACTION WITH CLSPN</scope>
    <scope>ACTIVITY REGULATION</scope>
    <scope>CATALYTIC ACTIVITY</scope>
</reference>
<reference key="44">
    <citation type="journal article" date="2007" name="EMBO J.">
        <title>Phosphorylation of pRB at Ser612 by Chk1/2 leads to a complex between pRB and E2F-1 after DNA damage.</title>
        <authorList>
            <person name="Inoue Y."/>
            <person name="Kitagawa M."/>
            <person name="Taya Y."/>
        </authorList>
    </citation>
    <scope>FUNCTION IN PHOSPHORYLATION OF RB1</scope>
    <scope>CATALYTIC ACTIVITY</scope>
</reference>
<reference key="45">
    <citation type="journal article" date="2007" name="Mol. Cell. Biol.">
        <title>Chk1-mediated phosphorylation of FANCE is required for the Fanconi anemia/BRCA pathway.</title>
        <authorList>
            <person name="Wang X."/>
            <person name="Kennedy R.D."/>
            <person name="Ray K."/>
            <person name="Stuckert P."/>
            <person name="Ellenberger T."/>
            <person name="D'Andrea A.D."/>
        </authorList>
    </citation>
    <scope>FUNCTION IN DNA CROSS-LINKS REPAIR</scope>
    <scope>FUNCTION IN PHOSPHORYLATION OF FANCE</scope>
    <scope>CATALYTIC ACTIVITY</scope>
</reference>
<reference key="46">
    <citation type="journal article" date="2007" name="Science">
        <title>ATM and ATR substrate analysis reveals extensive protein networks responsive to DNA damage.</title>
        <authorList>
            <person name="Matsuoka S."/>
            <person name="Ballif B.A."/>
            <person name="Smogorzewska A."/>
            <person name="McDonald E.R. III"/>
            <person name="Hurov K.E."/>
            <person name="Luo J."/>
            <person name="Bakalarski C.E."/>
            <person name="Zhao Z."/>
            <person name="Solimini N."/>
            <person name="Lerenthal Y."/>
            <person name="Shiloh Y."/>
            <person name="Gygi S.P."/>
            <person name="Elledge S.J."/>
        </authorList>
    </citation>
    <scope>IDENTIFICATION BY MASS SPECTROMETRY [LARGE SCALE ANALYSIS]</scope>
    <source>
        <tissue>Embryonic kidney</tissue>
    </source>
</reference>
<reference key="47">
    <citation type="journal article" date="2008" name="Cell">
        <title>Chk1 suppresses a caspase-2 apoptotic response to DNA damage that bypasses p53, Bcl-2, and caspase-3.</title>
        <authorList>
            <person name="Sidi S."/>
            <person name="Sanda T."/>
            <person name="Kennedy R.D."/>
            <person name="Hagen A.T."/>
            <person name="Jette C.A."/>
            <person name="Hoffmans R."/>
            <person name="Pascual J."/>
            <person name="Imamura S."/>
            <person name="Kishi S."/>
            <person name="Amatruda J.F."/>
            <person name="Kanki J.P."/>
            <person name="Green D.R."/>
            <person name="D'Andrea A.A."/>
            <person name="Look A.T."/>
        </authorList>
    </citation>
    <scope>FUNCTION IN APOPTOSIS</scope>
</reference>
<reference key="48">
    <citation type="journal article" date="2008" name="Cell Cycle">
        <title>Nek6 is involved in G2/M phase cell cycle arrest through DNA damage-induced phosphorylation.</title>
        <authorList>
            <person name="Lee M.Y."/>
            <person name="Kim H.J."/>
            <person name="Kim M.A."/>
            <person name="Jee H.J."/>
            <person name="Kim A.J."/>
            <person name="Bae Y.S."/>
            <person name="Park J.I."/>
            <person name="Chung J.H."/>
            <person name="Yun J."/>
        </authorList>
    </citation>
    <scope>FUNCTION IN PHOSPHORYLATION OF NEK6</scope>
    <scope>CATALYTIC ACTIVITY</scope>
</reference>
<reference key="49">
    <citation type="journal article" date="2008" name="Genes Dev.">
        <title>Chk1 and Claspin potentiate PCNA ubiquitination.</title>
        <authorList>
            <person name="Yang X.H."/>
            <person name="Shiotani B."/>
            <person name="Classon M."/>
            <person name="Zou L."/>
        </authorList>
    </citation>
    <scope>FUNCTION IN REPLICATION FORK MAINTENANCE</scope>
    <scope>FUNCTION IN PCNA UBIQUITINATION</scope>
</reference>
<reference key="50">
    <citation type="journal article" date="2008" name="Mol. Cell">
        <title>Kinase-selective enrichment enables quantitative phosphoproteomics of the kinome across the cell cycle.</title>
        <authorList>
            <person name="Daub H."/>
            <person name="Olsen J.V."/>
            <person name="Bairlein M."/>
            <person name="Gnad F."/>
            <person name="Oppermann F.S."/>
            <person name="Korner R."/>
            <person name="Greff Z."/>
            <person name="Keri G."/>
            <person name="Stemmann O."/>
            <person name="Mann M."/>
        </authorList>
    </citation>
    <scope>PHOSPHORYLATION [LARGE SCALE ANALYSIS] AT SER-301</scope>
    <scope>IDENTIFICATION BY MASS SPECTROMETRY [LARGE SCALE ANALYSIS]</scope>
    <source>
        <tissue>Cervix carcinoma</tissue>
    </source>
</reference>
<reference key="51">
    <citation type="journal article" date="2008" name="Oncogene">
        <title>The checkpoint kinases Chk1 and Chk2 regulate the functional associations between hBRCA2 and Rad51 in response to DNA damage.</title>
        <authorList>
            <person name="Bahassi E.M."/>
            <person name="Ovesen J.L."/>
            <person name="Riesenberg A.L."/>
            <person name="Bernstein W.Z."/>
            <person name="Hasty P.E."/>
            <person name="Stambrook P.J."/>
        </authorList>
    </citation>
    <scope>FUNCTION IN RAD51-MEDIATED DNA REPAIR</scope>
    <scope>FUNCTION IN PHOSPHORYLATION OF BRCA2 AND RAD51</scope>
    <scope>CATALYTIC ACTIVITY</scope>
</reference>
<reference key="52">
    <citation type="journal article" date="2008" name="Proc. Natl. Acad. Sci. U.S.A.">
        <title>A quantitative atlas of mitotic phosphorylation.</title>
        <authorList>
            <person name="Dephoure N."/>
            <person name="Zhou C."/>
            <person name="Villen J."/>
            <person name="Beausoleil S.A."/>
            <person name="Bakalarski C.E."/>
            <person name="Elledge S.J."/>
            <person name="Gygi S.P."/>
        </authorList>
    </citation>
    <scope>PHOSPHORYLATION [LARGE SCALE ANALYSIS] AT SER-286; SER-296 AND SER-301</scope>
    <scope>IDENTIFICATION BY MASS SPECTROMETRY [LARGE SCALE ANALYSIS]</scope>
    <source>
        <tissue>Cervix carcinoma</tissue>
    </source>
</reference>
<reference key="53">
    <citation type="journal article" date="2009" name="Anal. Chem.">
        <title>Lys-N and trypsin cover complementary parts of the phosphoproteome in a refined SCX-based approach.</title>
        <authorList>
            <person name="Gauci S."/>
            <person name="Helbig A.O."/>
            <person name="Slijper M."/>
            <person name="Krijgsveld J."/>
            <person name="Heck A.J."/>
            <person name="Mohammed S."/>
        </authorList>
    </citation>
    <scope>IDENTIFICATION BY MASS SPECTROMETRY [LARGE SCALE ANALYSIS]</scope>
</reference>
<reference key="54">
    <citation type="journal article" date="2009" name="Cell Res.">
        <title>Tumor suppressor protein C53 antagonizes checkpoint kinases to promote cyclin-dependent kinase 1 activation.</title>
        <authorList>
            <person name="Jiang H."/>
            <person name="Wu J."/>
            <person name="He C."/>
            <person name="Yang W."/>
            <person name="Li H."/>
        </authorList>
    </citation>
    <scope>INTERACTION WITH CDK5RAP3</scope>
</reference>
<reference key="55">
    <citation type="journal article" date="2009" name="Mol. Cell">
        <title>The F box protein Fbx6 regulates Chk1 stability and cellular sensitivity to replication stress.</title>
        <authorList>
            <person name="Zhang Y.-W."/>
            <person name="Brognard J."/>
            <person name="Coughlin C."/>
            <person name="You Z."/>
            <person name="Dolled-Filhart M."/>
            <person name="Aslanian A."/>
            <person name="Manning G."/>
            <person name="Abraham R.T."/>
            <person name="Hunter T."/>
        </authorList>
    </citation>
    <scope>PHOSPHORYLATION AT SER-345</scope>
    <scope>UBIQUITINATION AT LYS-436</scope>
    <scope>INTERACTION WITH FBXO6</scope>
    <scope>MUTAGENESIS OF SER-345; ARG-372; ARG-376; ARG-379 AND LYS-436</scope>
</reference>
<reference key="56">
    <citation type="journal article" date="2009" name="Mol. Cell. Proteomics">
        <title>Large-scale proteomics analysis of the human kinome.</title>
        <authorList>
            <person name="Oppermann F.S."/>
            <person name="Gnad F."/>
            <person name="Olsen J.V."/>
            <person name="Hornberger R."/>
            <person name="Greff Z."/>
            <person name="Keri G."/>
            <person name="Mann M."/>
            <person name="Daub H."/>
        </authorList>
    </citation>
    <scope>PHOSPHORYLATION [LARGE SCALE ANALYSIS] AT SER-296</scope>
    <scope>IDENTIFICATION BY MASS SPECTROMETRY [LARGE SCALE ANALYSIS]</scope>
</reference>
<reference key="57">
    <citation type="journal article" date="2009" name="Nat. Cell Biol.">
        <title>NEK11 regulates CDC25A degradation and the IR-induced G2/M checkpoint.</title>
        <authorList>
            <person name="Melixetian M."/>
            <person name="Klein D.K."/>
            <person name="Soerensen C.S."/>
            <person name="Helin K."/>
        </authorList>
    </citation>
    <scope>FUNCTION IN NEK11 PHOSPHORYLATION</scope>
</reference>
<reference key="58">
    <citation type="journal article" date="2009" name="Oncogene">
        <title>Human FEM1B is required for Rad9 recruitment and CHK1 activation in response to replication stress.</title>
        <authorList>
            <person name="Sun T.P."/>
            <person name="Shieh S.Y."/>
        </authorList>
    </citation>
    <scope>INTERACTION WITH FEM1B</scope>
    <scope>ACTIVITY REGULATION</scope>
</reference>
<reference key="59">
    <citation type="journal article" date="2009" name="Sci. Signal.">
        <title>Quantitative phosphoproteomic analysis of T cell receptor signaling reveals system-wide modulation of protein-protein interactions.</title>
        <authorList>
            <person name="Mayya V."/>
            <person name="Lundgren D.H."/>
            <person name="Hwang S.-I."/>
            <person name="Rezaul K."/>
            <person name="Wu L."/>
            <person name="Eng J.K."/>
            <person name="Rodionov V."/>
            <person name="Han D.K."/>
        </authorList>
    </citation>
    <scope>PHOSPHORYLATION [LARGE SCALE ANALYSIS] AT SER-301</scope>
    <scope>IDENTIFICATION BY MASS SPECTROMETRY [LARGE SCALE ANALYSIS]</scope>
    <source>
        <tissue>Leukemic T-cell</tissue>
    </source>
</reference>
<reference key="60">
    <citation type="journal article" date="2010" name="Cell Cycle">
        <title>NEK11: linking CHK1 and CDC25A in DNA damage checkpoint signaling.</title>
        <authorList>
            <person name="Soerensen C.S."/>
            <person name="Melixetian M."/>
            <person name="Klein D.K."/>
            <person name="Helin K."/>
        </authorList>
    </citation>
    <scope>FUNCTION IN CDC25A DEGRADATION</scope>
</reference>
<reference key="61">
    <citation type="journal article" date="2010" name="Sci. Signal.">
        <title>Quantitative phosphoproteomics reveals widespread full phosphorylation site occupancy during mitosis.</title>
        <authorList>
            <person name="Olsen J.V."/>
            <person name="Vermeulen M."/>
            <person name="Santamaria A."/>
            <person name="Kumar C."/>
            <person name="Miller M.L."/>
            <person name="Jensen L.J."/>
            <person name="Gnad F."/>
            <person name="Cox J."/>
            <person name="Jensen T.S."/>
            <person name="Nigg E.A."/>
            <person name="Brunak S."/>
            <person name="Mann M."/>
        </authorList>
    </citation>
    <scope>PHOSPHORYLATION [LARGE SCALE ANALYSIS] AT SER-286; SER-296 AND SER-301</scope>
    <scope>IDENTIFICATION BY MASS SPECTROMETRY [LARGE SCALE ANALYSIS]</scope>
    <source>
        <tissue>Cervix carcinoma</tissue>
    </source>
</reference>
<reference key="62">
    <citation type="journal article" date="2011" name="BMC Syst. Biol.">
        <title>Initial characterization of the human central proteome.</title>
        <authorList>
            <person name="Burkard T.R."/>
            <person name="Planyavsky M."/>
            <person name="Kaupe I."/>
            <person name="Breitwieser F.P."/>
            <person name="Buerckstuemmer T."/>
            <person name="Bennett K.L."/>
            <person name="Superti-Furga G."/>
            <person name="Colinge J."/>
        </authorList>
    </citation>
    <scope>IDENTIFICATION BY MASS SPECTROMETRY [LARGE SCALE ANALYSIS]</scope>
</reference>
<reference key="63">
    <citation type="journal article" date="2011" name="Sci. Signal.">
        <title>System-wide temporal characterization of the proteome and phosphoproteome of human embryonic stem cell differentiation.</title>
        <authorList>
            <person name="Rigbolt K.T."/>
            <person name="Prokhorova T.A."/>
            <person name="Akimov V."/>
            <person name="Henningsen J."/>
            <person name="Johansen P.T."/>
            <person name="Kratchmarova I."/>
            <person name="Kassem M."/>
            <person name="Mann M."/>
            <person name="Olsen J.V."/>
            <person name="Blagoev B."/>
        </authorList>
    </citation>
    <scope>IDENTIFICATION BY MASS SPECTROMETRY [LARGE SCALE ANALYSIS]</scope>
</reference>
<reference key="64">
    <citation type="journal article" date="2013" name="J. Proteome Res.">
        <title>Toward a comprehensive characterization of a human cancer cell phosphoproteome.</title>
        <authorList>
            <person name="Zhou H."/>
            <person name="Di Palma S."/>
            <person name="Preisinger C."/>
            <person name="Peng M."/>
            <person name="Polat A.N."/>
            <person name="Heck A.J."/>
            <person name="Mohammed S."/>
        </authorList>
    </citation>
    <scope>PHOSPHORYLATION [LARGE SCALE ANALYSIS] AT SER-280; SER-296; SER-301; SER-331; SER-467 AND SER-468</scope>
    <scope>IDENTIFICATION BY MASS SPECTROMETRY [LARGE SCALE ANALYSIS]</scope>
    <source>
        <tissue>Cervix carcinoma</tissue>
        <tissue>Erythroleukemia</tissue>
    </source>
</reference>
<reference key="65">
    <citation type="journal article" date="2014" name="Cell">
        <title>ATR mediates a checkpoint at the nuclear envelope in response to mechanical stress.</title>
        <authorList>
            <person name="Kumar A."/>
            <person name="Mazzanti M."/>
            <person name="Mistrik M."/>
            <person name="Kosar M."/>
            <person name="Beznoussenko G.V."/>
            <person name="Mironov A.A."/>
            <person name="Garre M."/>
            <person name="Parazzoli D."/>
            <person name="Shivashankar G.V."/>
            <person name="Scita G."/>
            <person name="Bartek J."/>
            <person name="Foiani M."/>
        </authorList>
    </citation>
    <scope>PHOSPHORYLATION AT SER-345</scope>
</reference>
<reference key="66">
    <citation type="journal article" date="2019" name="Nat. Commun.">
        <title>SPRTN protease and checkpoint kinase 1 cross-activation loop safeguards DNA replication.</title>
        <authorList>
            <person name="Halder S."/>
            <person name="Torrecilla I."/>
            <person name="Burkhalter M.D."/>
            <person name="Popovic M."/>
            <person name="Fielden J."/>
            <person name="Vaz B."/>
            <person name="Oehler J."/>
            <person name="Pilger D."/>
            <person name="Lessel D."/>
            <person name="Wiseman K."/>
            <person name="Singh A.N."/>
            <person name="Vendrell I."/>
            <person name="Fischer R."/>
            <person name="Philipp M."/>
            <person name="Ramadan K."/>
        </authorList>
    </citation>
    <scope>FUNCTION IN PHOSPHORYLATION OF SPRTN</scope>
    <scope>CATALYTIC ACTIVITY</scope>
    <scope>SUBCELLULAR LOCATION</scope>
    <scope>PROTEOLYTIC CLEAVAGE</scope>
    <scope>ACTIVITY REGULATION</scope>
    <scope>PHOSPHORYLATION AT SER-345</scope>
</reference>
<reference key="67">
    <citation type="journal article" date="2020" name="Mol. Cell">
        <title>CHK1 Inhibitor Blocks Phosphorylation of FAM122A and Promotes Replication Stress.</title>
        <authorList>
            <person name="Li F."/>
            <person name="Kozono D."/>
            <person name="Deraska P."/>
            <person name="Branigan T."/>
            <person name="Dunn C."/>
            <person name="Zheng X.F."/>
            <person name="Parmar K."/>
            <person name="Nguyen H."/>
            <person name="DeCaprio J."/>
            <person name="Shapiro G.I."/>
            <person name="Chowdhury D."/>
            <person name="D'Andrea A.D."/>
        </authorList>
    </citation>
    <scope>FUNCTION</scope>
</reference>
<reference key="68">
    <citation type="journal article" date="2020" name="J. Hematol. Oncol.">
        <title>Ubiquitination of the DNA-damage checkpoint kinase CHK1 by TRAF4 is required for CHK1 activation.</title>
        <authorList>
            <person name="Yu X."/>
            <person name="Li W."/>
            <person name="Liu H."/>
            <person name="Deng Q."/>
            <person name="Wang X."/>
            <person name="Hu H."/>
            <person name="Xu-Monette Z.Y."/>
            <person name="Xiong W."/>
            <person name="Lu Z."/>
            <person name="Young K.H."/>
            <person name="Wang W."/>
            <person name="Li Y."/>
        </authorList>
    </citation>
    <scope>FUNCTION</scope>
    <scope>UBIQUITINATION BY TRAF4</scope>
    <scope>MUTAGENESIS OF LYS-132</scope>
</reference>
<reference key="69">
    <citation type="journal article" date="2000" name="Cell">
        <title>The 1.7 A crystal structure of human cell cycle checkpoint kinase Chk1: implications for Chk1 regulation.</title>
        <authorList>
            <person name="Chen P."/>
            <person name="Luo C."/>
            <person name="Deng Y."/>
            <person name="Ryan K."/>
            <person name="Register J."/>
            <person name="Margosiak S."/>
            <person name="Tempczyk-Russell A."/>
            <person name="Nguyen B."/>
            <person name="Myers P."/>
            <person name="Lundgren K."/>
            <person name="Kan C.-C."/>
            <person name="O'Connor P.M."/>
        </authorList>
    </citation>
    <scope>X-RAY CRYSTALLOGRAPHY (1.7 ANGSTROMS) OF 1-289</scope>
</reference>
<reference key="70">
    <citation type="journal article" date="2002" name="J. Biol. Chem.">
        <title>Structural basis for Chk1 inhibition by UCN-01.</title>
        <authorList>
            <person name="Zhao B."/>
            <person name="Bower M.J."/>
            <person name="McDevitt P.J."/>
            <person name="Zhao H."/>
            <person name="Davis S.T."/>
            <person name="Johanson K.O."/>
            <person name="Green S.M."/>
            <person name="Concha N.O."/>
            <person name="Zhou B.-B.S."/>
        </authorList>
    </citation>
    <scope>X-RAY CRYSTALLOGRAPHY (1.8 ANGSTROMS) OF 1-289</scope>
</reference>
<reference key="71">
    <citation type="journal article" date="2005" name="J. Med. Chem.">
        <title>Structure-based design of novel Chk1 inhibitors: insights into hydrogen bonding and protein-ligand affinity.</title>
        <authorList>
            <person name="Foloppe N."/>
            <person name="Fisher L.M."/>
            <person name="Howes R."/>
            <person name="Kierstan P."/>
            <person name="Potter A."/>
            <person name="Robertson A.G.S."/>
            <person name="Surgenor A.E."/>
        </authorList>
    </citation>
    <scope>X-RAY CRYSTALLOGRAPHY (2.0 ANGSTROMS) OF 1-289</scope>
</reference>
<reference key="72">
    <citation type="journal article" date="2007" name="Nature">
        <title>Patterns of somatic mutation in human cancer genomes.</title>
        <authorList>
            <person name="Greenman C."/>
            <person name="Stephens P."/>
            <person name="Smith R."/>
            <person name="Dalgliesh G.L."/>
            <person name="Hunter C."/>
            <person name="Bignell G."/>
            <person name="Davies H."/>
            <person name="Teague J."/>
            <person name="Butler A."/>
            <person name="Stevens C."/>
            <person name="Edkins S."/>
            <person name="O'Meara S."/>
            <person name="Vastrik I."/>
            <person name="Schmidt E.E."/>
            <person name="Avis T."/>
            <person name="Barthorpe S."/>
            <person name="Bhamra G."/>
            <person name="Buck G."/>
            <person name="Choudhury B."/>
            <person name="Clements J."/>
            <person name="Cole J."/>
            <person name="Dicks E."/>
            <person name="Forbes S."/>
            <person name="Gray K."/>
            <person name="Halliday K."/>
            <person name="Harrison R."/>
            <person name="Hills K."/>
            <person name="Hinton J."/>
            <person name="Jenkinson A."/>
            <person name="Jones D."/>
            <person name="Menzies A."/>
            <person name="Mironenko T."/>
            <person name="Perry J."/>
            <person name="Raine K."/>
            <person name="Richardson D."/>
            <person name="Shepherd R."/>
            <person name="Small A."/>
            <person name="Tofts C."/>
            <person name="Varian J."/>
            <person name="Webb T."/>
            <person name="West S."/>
            <person name="Widaa S."/>
            <person name="Yates A."/>
            <person name="Cahill D.P."/>
            <person name="Louis D.N."/>
            <person name="Goldstraw P."/>
            <person name="Nicholson A.G."/>
            <person name="Brasseur F."/>
            <person name="Looijenga L."/>
            <person name="Weber B.L."/>
            <person name="Chiew Y.-E."/>
            <person name="DeFazio A."/>
            <person name="Greaves M.F."/>
            <person name="Green A.R."/>
            <person name="Campbell P."/>
            <person name="Birney E."/>
            <person name="Easton D.F."/>
            <person name="Chenevix-Trench G."/>
            <person name="Tan M.-H."/>
            <person name="Khoo S.K."/>
            <person name="Teh B.T."/>
            <person name="Yuen S.T."/>
            <person name="Leung S.Y."/>
            <person name="Wooster R."/>
            <person name="Futreal P.A."/>
            <person name="Stratton M.R."/>
        </authorList>
    </citation>
    <scope>VARIANTS [LARGE SCALE ANALYSIS] VAL-223 AND MET-312</scope>
</reference>
<reference key="73">
    <citation type="journal article" date="2021" name="Cell Res.">
        <title>Dominant mutations in CHK1 cause pronuclear fusion failure and zygote arrest that can be rescued by CHK1 inhibitor.</title>
        <authorList>
            <person name="Zhang H."/>
            <person name="Chen T."/>
            <person name="Wu K."/>
            <person name="Hou Z."/>
            <person name="Zhao S."/>
            <person name="Zhang C."/>
            <person name="Gao Y."/>
            <person name="Gao M."/>
            <person name="Chen Z.J."/>
            <person name="Zhao H."/>
        </authorList>
    </citation>
    <scope>VARIANTS OZEMA21 GLN-379; LYS-420 AND GLN-442</scope>
    <scope>CHARACTERIZATION OF VARIANTS OZEMA21 GLN-379; LYS-420 AND GLN-442</scope>
    <scope>INVOLVEMENT IN OZEMA21</scope>
</reference>
<reference key="74">
    <citation type="journal article" date="2022" name="Protein Cell">
        <title>Maternal heterozygous mutation in CHEK1 leads to mitotic arrest in human zygotes.</title>
        <authorList>
            <person name="Chen B."/>
            <person name="Guo J."/>
            <person name="Wang T."/>
            <person name="Lee Q."/>
            <person name="Ming J."/>
            <person name="Ding F."/>
            <person name="Li H."/>
            <person name="Zhang Z."/>
            <person name="Li L."/>
            <person name="Cao Y."/>
            <person name="Na J."/>
        </authorList>
    </citation>
    <scope>VARIANT OZEMA21 GLN-442</scope>
    <scope>CHARACTERIZATION OF VARIANT OZEMA21 GLN-442</scope>
    <scope>INVOLVEMENT IN OZEMA21</scope>
</reference>
<proteinExistence type="evidence at protein level"/>
<accession>O14757</accession>
<accession>A8K934</accession>
<accession>B4DDD0</accession>
<accession>B4DSK3</accession>
<accession>B5BTY6</accession>
<accession>F5H7S4</accession>
<accession>H2BI51</accession>
<keyword id="KW-0002">3D-structure</keyword>
<keyword id="KW-0025">Alternative splicing</keyword>
<keyword id="KW-0067">ATP-binding</keyword>
<keyword id="KW-0131">Cell cycle</keyword>
<keyword id="KW-0158">Chromosome</keyword>
<keyword id="KW-0963">Cytoplasm</keyword>
<keyword id="KW-0206">Cytoskeleton</keyword>
<keyword id="KW-0225">Disease variant</keyword>
<keyword id="KW-0227">DNA damage</keyword>
<keyword id="KW-0234">DNA repair</keyword>
<keyword id="KW-1017">Isopeptide bond</keyword>
<keyword id="KW-0418">Kinase</keyword>
<keyword id="KW-0547">Nucleotide-binding</keyword>
<keyword id="KW-0539">Nucleus</keyword>
<keyword id="KW-0597">Phosphoprotein</keyword>
<keyword id="KW-1267">Proteomics identification</keyword>
<keyword id="KW-1185">Reference proteome</keyword>
<keyword id="KW-0723">Serine/threonine-protein kinase</keyword>
<keyword id="KW-0808">Transferase</keyword>
<keyword id="KW-0832">Ubl conjugation</keyword>
<sequence>MAVPFVEDWDLVQTLGEGAYGEVQLAVNRVTEEAVAVKIVDMKRAVDCPENIKKEICINKMLNHENVVKFYGHRREGNIQYLFLEYCSGGELFDRIEPDIGMPEPDAQRFFHQLMAGVVYLHGIGITHRDIKPENLLLDERDNLKISDFGLATVFRYNNRERLLNKMCGTLPYVAPELLKRREFHAEPVDVWSCGIVLTAMLAGELPWDQPSDSCQEYSDWKEKKTYLNPWKKIDSAPLALLHKILVENPSARITIPDIKKDRWYNKPLKKGAKRPRVTSGGVSESPSGFSKHIQSNLDFSPVNSASSEENVKYSSSQPEPRTGLSLWDTSPSYIDKLVQGISFSQPTCPDHMLLNSQLLGTPGSSQNPWQRLVKRMTRFFTKLDADKSYQCLKETCEKLGYQWKKSCMNQVTISTTDRRNNKLIFKVNLLEMDDKILVDFRLSKGDGLEFKRHFLKIKGKLIDIVSSQKIWLPAT</sequence>
<dbReference type="EC" id="2.7.11.1" evidence="5 15 22 31 58"/>
<dbReference type="EMBL" id="AF016582">
    <property type="protein sequence ID" value="AAC51736.1"/>
    <property type="molecule type" value="mRNA"/>
</dbReference>
<dbReference type="EMBL" id="AF032874">
    <property type="protein sequence ID" value="AAB88852.1"/>
    <property type="molecule type" value="mRNA"/>
</dbReference>
<dbReference type="EMBL" id="AB032387">
    <property type="protein sequence ID" value="BAA84577.1"/>
    <property type="molecule type" value="Genomic_DNA"/>
</dbReference>
<dbReference type="EMBL" id="JF289264">
    <property type="protein sequence ID" value="AEB71796.1"/>
    <property type="molecule type" value="mRNA"/>
</dbReference>
<dbReference type="EMBL" id="AK292549">
    <property type="protein sequence ID" value="BAF85238.1"/>
    <property type="molecule type" value="mRNA"/>
</dbReference>
<dbReference type="EMBL" id="AK293143">
    <property type="protein sequence ID" value="BAG56691.1"/>
    <property type="molecule type" value="mRNA"/>
</dbReference>
<dbReference type="EMBL" id="AK299783">
    <property type="protein sequence ID" value="BAG61665.1"/>
    <property type="molecule type" value="mRNA"/>
</dbReference>
<dbReference type="EMBL" id="AF527555">
    <property type="protein sequence ID" value="AAM78553.1"/>
    <property type="molecule type" value="Genomic_DNA"/>
</dbReference>
<dbReference type="EMBL" id="AB451222">
    <property type="protein sequence ID" value="BAG70036.1"/>
    <property type="molecule type" value="mRNA"/>
</dbReference>
<dbReference type="EMBL" id="AB451345">
    <property type="protein sequence ID" value="BAG70159.1"/>
    <property type="molecule type" value="mRNA"/>
</dbReference>
<dbReference type="EMBL" id="AP001132">
    <property type="status" value="NOT_ANNOTATED_CDS"/>
    <property type="molecule type" value="Genomic_DNA"/>
</dbReference>
<dbReference type="EMBL" id="CH471065">
    <property type="protein sequence ID" value="EAW67644.1"/>
    <property type="molecule type" value="Genomic_DNA"/>
</dbReference>
<dbReference type="EMBL" id="BC004202">
    <property type="protein sequence ID" value="AAH04202.1"/>
    <property type="molecule type" value="mRNA"/>
</dbReference>
<dbReference type="EMBL" id="BC017575">
    <property type="protein sequence ID" value="AAH17575.1"/>
    <property type="molecule type" value="mRNA"/>
</dbReference>
<dbReference type="CCDS" id="CCDS58191.1">
    <molecule id="O14757-3"/>
</dbReference>
<dbReference type="CCDS" id="CCDS81645.1">
    <molecule id="O14757-2"/>
</dbReference>
<dbReference type="CCDS" id="CCDS8459.1">
    <molecule id="O14757-1"/>
</dbReference>
<dbReference type="RefSeq" id="NP_001107593.1">
    <molecule id="O14757-1"/>
    <property type="nucleotide sequence ID" value="NM_001114121.2"/>
</dbReference>
<dbReference type="RefSeq" id="NP_001107594.1">
    <molecule id="O14757-1"/>
    <property type="nucleotide sequence ID" value="NM_001114122.3"/>
</dbReference>
<dbReference type="RefSeq" id="NP_001231775.1">
    <molecule id="O14757-3"/>
    <property type="nucleotide sequence ID" value="NM_001244846.1"/>
</dbReference>
<dbReference type="RefSeq" id="NP_001265.2">
    <molecule id="O14757-1"/>
    <property type="nucleotide sequence ID" value="NM_001274.5"/>
</dbReference>
<dbReference type="RefSeq" id="NP_001317357.1">
    <molecule id="O14757-2"/>
    <property type="nucleotide sequence ID" value="NM_001330428.1"/>
</dbReference>
<dbReference type="RefSeq" id="XP_016872635.1">
    <property type="nucleotide sequence ID" value="XM_017017146.1"/>
</dbReference>
<dbReference type="RefSeq" id="XP_024304105.1">
    <molecule id="O14757-1"/>
    <property type="nucleotide sequence ID" value="XM_024448337.2"/>
</dbReference>
<dbReference type="RefSeq" id="XP_047282267.1">
    <molecule id="O14757-1"/>
    <property type="nucleotide sequence ID" value="XM_047426311.1"/>
</dbReference>
<dbReference type="RefSeq" id="XP_047282269.1">
    <molecule id="O14757-2"/>
    <property type="nucleotide sequence ID" value="XM_047426313.1"/>
</dbReference>
<dbReference type="PDB" id="1IA8">
    <property type="method" value="X-ray"/>
    <property type="resolution" value="1.70 A"/>
    <property type="chains" value="A=1-289"/>
</dbReference>
<dbReference type="PDB" id="1NVQ">
    <property type="method" value="X-ray"/>
    <property type="resolution" value="2.00 A"/>
    <property type="chains" value="A=1-289"/>
</dbReference>
<dbReference type="PDB" id="1NVR">
    <property type="method" value="X-ray"/>
    <property type="resolution" value="1.80 A"/>
    <property type="chains" value="A=1-289"/>
</dbReference>
<dbReference type="PDB" id="1NVS">
    <property type="method" value="X-ray"/>
    <property type="resolution" value="1.80 A"/>
    <property type="chains" value="A=1-289"/>
</dbReference>
<dbReference type="PDB" id="1ZLT">
    <property type="method" value="X-ray"/>
    <property type="resolution" value="1.74 A"/>
    <property type="chains" value="A=1-289"/>
</dbReference>
<dbReference type="PDB" id="1ZYS">
    <property type="method" value="X-ray"/>
    <property type="resolution" value="1.70 A"/>
    <property type="chains" value="A=1-273"/>
</dbReference>
<dbReference type="PDB" id="2AYP">
    <property type="method" value="X-ray"/>
    <property type="resolution" value="2.90 A"/>
    <property type="chains" value="A=1-269"/>
</dbReference>
<dbReference type="PDB" id="2BR1">
    <property type="method" value="X-ray"/>
    <property type="resolution" value="2.00 A"/>
    <property type="chains" value="A=1-289"/>
</dbReference>
<dbReference type="PDB" id="2BRB">
    <property type="method" value="X-ray"/>
    <property type="resolution" value="2.10 A"/>
    <property type="chains" value="A=1-289"/>
</dbReference>
<dbReference type="PDB" id="2BRG">
    <property type="method" value="X-ray"/>
    <property type="resolution" value="2.10 A"/>
    <property type="chains" value="A=1-289"/>
</dbReference>
<dbReference type="PDB" id="2BRH">
    <property type="method" value="X-ray"/>
    <property type="resolution" value="2.10 A"/>
    <property type="chains" value="A=1-289"/>
</dbReference>
<dbReference type="PDB" id="2BRM">
    <property type="method" value="X-ray"/>
    <property type="resolution" value="2.20 A"/>
    <property type="chains" value="A=1-289"/>
</dbReference>
<dbReference type="PDB" id="2BRN">
    <property type="method" value="X-ray"/>
    <property type="resolution" value="2.80 A"/>
    <property type="chains" value="A=1-289"/>
</dbReference>
<dbReference type="PDB" id="2BRO">
    <property type="method" value="X-ray"/>
    <property type="resolution" value="2.20 A"/>
    <property type="chains" value="A=1-289"/>
</dbReference>
<dbReference type="PDB" id="2C3J">
    <property type="method" value="X-ray"/>
    <property type="resolution" value="2.10 A"/>
    <property type="chains" value="A=1-289"/>
</dbReference>
<dbReference type="PDB" id="2C3K">
    <property type="method" value="X-ray"/>
    <property type="resolution" value="2.60 A"/>
    <property type="chains" value="A=1-289"/>
</dbReference>
<dbReference type="PDB" id="2C3L">
    <property type="method" value="X-ray"/>
    <property type="resolution" value="2.35 A"/>
    <property type="chains" value="A=1-289"/>
</dbReference>
<dbReference type="PDB" id="2CGU">
    <property type="method" value="X-ray"/>
    <property type="resolution" value="2.50 A"/>
    <property type="chains" value="A=1-289"/>
</dbReference>
<dbReference type="PDB" id="2CGV">
    <property type="method" value="X-ray"/>
    <property type="resolution" value="2.60 A"/>
    <property type="chains" value="A=1-289"/>
</dbReference>
<dbReference type="PDB" id="2CGW">
    <property type="method" value="X-ray"/>
    <property type="resolution" value="2.20 A"/>
    <property type="chains" value="A=1-289"/>
</dbReference>
<dbReference type="PDB" id="2CGX">
    <property type="method" value="X-ray"/>
    <property type="resolution" value="2.20 A"/>
    <property type="chains" value="A=1-289"/>
</dbReference>
<dbReference type="PDB" id="2E9N">
    <property type="method" value="X-ray"/>
    <property type="resolution" value="2.50 A"/>
    <property type="chains" value="A=2-270"/>
</dbReference>
<dbReference type="PDB" id="2E9O">
    <property type="method" value="X-ray"/>
    <property type="resolution" value="2.10 A"/>
    <property type="chains" value="A=2-270"/>
</dbReference>
<dbReference type="PDB" id="2E9P">
    <property type="method" value="X-ray"/>
    <property type="resolution" value="2.60 A"/>
    <property type="chains" value="A=2-270"/>
</dbReference>
<dbReference type="PDB" id="2E9U">
    <property type="method" value="X-ray"/>
    <property type="resolution" value="2.00 A"/>
    <property type="chains" value="A=2-270"/>
</dbReference>
<dbReference type="PDB" id="2E9V">
    <property type="method" value="X-ray"/>
    <property type="resolution" value="2.00 A"/>
    <property type="chains" value="A/B=2-269"/>
</dbReference>
<dbReference type="PDB" id="2GDO">
    <property type="method" value="X-ray"/>
    <property type="resolution" value="3.00 A"/>
    <property type="chains" value="A=1-289"/>
</dbReference>
<dbReference type="PDB" id="2GHG">
    <property type="method" value="X-ray"/>
    <property type="resolution" value="3.50 A"/>
    <property type="chains" value="A=2-270"/>
</dbReference>
<dbReference type="PDB" id="2HOG">
    <property type="method" value="X-ray"/>
    <property type="resolution" value="1.90 A"/>
    <property type="chains" value="A=2-307"/>
</dbReference>
<dbReference type="PDB" id="2HXL">
    <property type="method" value="X-ray"/>
    <property type="resolution" value="1.80 A"/>
    <property type="chains" value="A=2-307"/>
</dbReference>
<dbReference type="PDB" id="2HXQ">
    <property type="method" value="X-ray"/>
    <property type="resolution" value="2.00 A"/>
    <property type="chains" value="A=2-307"/>
</dbReference>
<dbReference type="PDB" id="2HY0">
    <property type="method" value="X-ray"/>
    <property type="resolution" value="1.70 A"/>
    <property type="chains" value="A=2-307"/>
</dbReference>
<dbReference type="PDB" id="2QHM">
    <property type="method" value="X-ray"/>
    <property type="resolution" value="2.00 A"/>
    <property type="chains" value="A=1-307"/>
</dbReference>
<dbReference type="PDB" id="2QHN">
    <property type="method" value="X-ray"/>
    <property type="resolution" value="1.70 A"/>
    <property type="chains" value="A=1-307"/>
</dbReference>
<dbReference type="PDB" id="2R0U">
    <property type="method" value="X-ray"/>
    <property type="resolution" value="1.90 A"/>
    <property type="chains" value="A=1-307"/>
</dbReference>
<dbReference type="PDB" id="2WMQ">
    <property type="method" value="X-ray"/>
    <property type="resolution" value="2.48 A"/>
    <property type="chains" value="A=1-289"/>
</dbReference>
<dbReference type="PDB" id="2WMR">
    <property type="method" value="X-ray"/>
    <property type="resolution" value="2.43 A"/>
    <property type="chains" value="A=1-289"/>
</dbReference>
<dbReference type="PDB" id="2WMS">
    <property type="method" value="X-ray"/>
    <property type="resolution" value="2.70 A"/>
    <property type="chains" value="A=1-289"/>
</dbReference>
<dbReference type="PDB" id="2WMT">
    <property type="method" value="X-ray"/>
    <property type="resolution" value="2.55 A"/>
    <property type="chains" value="A=1-289"/>
</dbReference>
<dbReference type="PDB" id="2WMU">
    <property type="method" value="X-ray"/>
    <property type="resolution" value="2.60 A"/>
    <property type="chains" value="A=1-289"/>
</dbReference>
<dbReference type="PDB" id="2WMV">
    <property type="method" value="X-ray"/>
    <property type="resolution" value="2.01 A"/>
    <property type="chains" value="A=1-289"/>
</dbReference>
<dbReference type="PDB" id="2WMW">
    <property type="method" value="X-ray"/>
    <property type="resolution" value="2.43 A"/>
    <property type="chains" value="A=1-289"/>
</dbReference>
<dbReference type="PDB" id="2WMX">
    <property type="method" value="X-ray"/>
    <property type="resolution" value="2.45 A"/>
    <property type="chains" value="A=1-289"/>
</dbReference>
<dbReference type="PDB" id="2X8D">
    <property type="method" value="X-ray"/>
    <property type="resolution" value="1.90 A"/>
    <property type="chains" value="A=1-289"/>
</dbReference>
<dbReference type="PDB" id="2X8E">
    <property type="method" value="X-ray"/>
    <property type="resolution" value="2.50 A"/>
    <property type="chains" value="A=1-276"/>
</dbReference>
<dbReference type="PDB" id="2X8I">
    <property type="method" value="X-ray"/>
    <property type="resolution" value="1.92 A"/>
    <property type="chains" value="A=1-289"/>
</dbReference>
<dbReference type="PDB" id="2XEY">
    <property type="method" value="X-ray"/>
    <property type="resolution" value="2.70 A"/>
    <property type="chains" value="A=1-289"/>
</dbReference>
<dbReference type="PDB" id="2XEZ">
    <property type="method" value="X-ray"/>
    <property type="resolution" value="2.25 A"/>
    <property type="chains" value="A=1-289"/>
</dbReference>
<dbReference type="PDB" id="2XF0">
    <property type="method" value="X-ray"/>
    <property type="resolution" value="2.40 A"/>
    <property type="chains" value="A=1-289"/>
</dbReference>
<dbReference type="PDB" id="2YDI">
    <property type="method" value="X-ray"/>
    <property type="resolution" value="1.60 A"/>
    <property type="chains" value="A=1-289"/>
</dbReference>
<dbReference type="PDB" id="2YDJ">
    <property type="method" value="X-ray"/>
    <property type="resolution" value="1.85 A"/>
    <property type="chains" value="A/B=1-276"/>
</dbReference>
<dbReference type="PDB" id="2YDK">
    <property type="method" value="X-ray"/>
    <property type="resolution" value="1.90 A"/>
    <property type="chains" value="A=1-276"/>
</dbReference>
<dbReference type="PDB" id="2YER">
    <property type="method" value="X-ray"/>
    <property type="resolution" value="1.83 A"/>
    <property type="chains" value="A=1-276"/>
</dbReference>
<dbReference type="PDB" id="2YEX">
    <property type="method" value="X-ray"/>
    <property type="resolution" value="1.30 A"/>
    <property type="chains" value="A=1-276"/>
</dbReference>
<dbReference type="PDB" id="2YM3">
    <property type="method" value="X-ray"/>
    <property type="resolution" value="2.01 A"/>
    <property type="chains" value="A=1-289"/>
</dbReference>
<dbReference type="PDB" id="2YM4">
    <property type="method" value="X-ray"/>
    <property type="resolution" value="2.35 A"/>
    <property type="chains" value="A=1-289"/>
</dbReference>
<dbReference type="PDB" id="2YM5">
    <property type="method" value="X-ray"/>
    <property type="resolution" value="2.03 A"/>
    <property type="chains" value="A=1-289"/>
</dbReference>
<dbReference type="PDB" id="2YM6">
    <property type="method" value="X-ray"/>
    <property type="resolution" value="2.01 A"/>
    <property type="chains" value="A=1-289"/>
</dbReference>
<dbReference type="PDB" id="2YM7">
    <property type="method" value="X-ray"/>
    <property type="resolution" value="1.81 A"/>
    <property type="chains" value="A=1-289"/>
</dbReference>
<dbReference type="PDB" id="2YM8">
    <property type="method" value="X-ray"/>
    <property type="resolution" value="2.07 A"/>
    <property type="chains" value="A=1-289"/>
</dbReference>
<dbReference type="PDB" id="2YWP">
    <property type="method" value="X-ray"/>
    <property type="resolution" value="2.90 A"/>
    <property type="chains" value="A=2-270"/>
</dbReference>
<dbReference type="PDB" id="3F9N">
    <property type="method" value="X-ray"/>
    <property type="resolution" value="1.90 A"/>
    <property type="chains" value="A=2-307"/>
</dbReference>
<dbReference type="PDB" id="3JVR">
    <property type="method" value="X-ray"/>
    <property type="resolution" value="1.76 A"/>
    <property type="chains" value="A=2-272"/>
</dbReference>
<dbReference type="PDB" id="3JVS">
    <property type="method" value="X-ray"/>
    <property type="resolution" value="1.90 A"/>
    <property type="chains" value="A=2-272"/>
</dbReference>
<dbReference type="PDB" id="3NLB">
    <property type="method" value="X-ray"/>
    <property type="resolution" value="1.90 A"/>
    <property type="chains" value="A=1-289"/>
</dbReference>
<dbReference type="PDB" id="3OT3">
    <property type="method" value="X-ray"/>
    <property type="resolution" value="1.44 A"/>
    <property type="chains" value="A=2-274"/>
</dbReference>
<dbReference type="PDB" id="3OT8">
    <property type="method" value="X-ray"/>
    <property type="resolution" value="1.65 A"/>
    <property type="chains" value="A=2-274"/>
</dbReference>
<dbReference type="PDB" id="3PA3">
    <property type="method" value="X-ray"/>
    <property type="resolution" value="1.40 A"/>
    <property type="chains" value="A=2-274"/>
</dbReference>
<dbReference type="PDB" id="3PA4">
    <property type="method" value="X-ray"/>
    <property type="resolution" value="1.59 A"/>
    <property type="chains" value="A=2-274"/>
</dbReference>
<dbReference type="PDB" id="3PA5">
    <property type="method" value="X-ray"/>
    <property type="resolution" value="1.70 A"/>
    <property type="chains" value="A=2-274"/>
</dbReference>
<dbReference type="PDB" id="3TKH">
    <property type="method" value="X-ray"/>
    <property type="resolution" value="1.79 A"/>
    <property type="chains" value="A=1-307"/>
</dbReference>
<dbReference type="PDB" id="3TKI">
    <property type="method" value="X-ray"/>
    <property type="resolution" value="1.60 A"/>
    <property type="chains" value="A=1-307"/>
</dbReference>
<dbReference type="PDB" id="3U9N">
    <property type="method" value="X-ray"/>
    <property type="resolution" value="1.85 A"/>
    <property type="chains" value="A=2-274"/>
</dbReference>
<dbReference type="PDB" id="4FSM">
    <property type="method" value="X-ray"/>
    <property type="resolution" value="2.30 A"/>
    <property type="chains" value="A=2-280"/>
</dbReference>
<dbReference type="PDB" id="4FSN">
    <property type="method" value="X-ray"/>
    <property type="resolution" value="2.10 A"/>
    <property type="chains" value="A=4-280"/>
</dbReference>
<dbReference type="PDB" id="4FSQ">
    <property type="method" value="X-ray"/>
    <property type="resolution" value="2.40 A"/>
    <property type="chains" value="A=2-280"/>
</dbReference>
<dbReference type="PDB" id="4FSR">
    <property type="method" value="X-ray"/>
    <property type="resolution" value="2.50 A"/>
    <property type="chains" value="A=2-280"/>
</dbReference>
<dbReference type="PDB" id="4FST">
    <property type="method" value="X-ray"/>
    <property type="resolution" value="1.90 A"/>
    <property type="chains" value="A=2-270"/>
</dbReference>
<dbReference type="PDB" id="4FSU">
    <property type="method" value="X-ray"/>
    <property type="resolution" value="2.10 A"/>
    <property type="chains" value="A=2-280"/>
</dbReference>
<dbReference type="PDB" id="4FSW">
    <property type="method" value="X-ray"/>
    <property type="resolution" value="2.30 A"/>
    <property type="chains" value="A=2-280"/>
</dbReference>
<dbReference type="PDB" id="4FSY">
    <property type="method" value="X-ray"/>
    <property type="resolution" value="2.30 A"/>
    <property type="chains" value="A=2-280"/>
</dbReference>
<dbReference type="PDB" id="4FSZ">
    <property type="method" value="X-ray"/>
    <property type="resolution" value="2.30 A"/>
    <property type="chains" value="A=2-280"/>
</dbReference>
<dbReference type="PDB" id="4FT0">
    <property type="method" value="X-ray"/>
    <property type="resolution" value="2.30 A"/>
    <property type="chains" value="A=2-280"/>
</dbReference>
<dbReference type="PDB" id="4FT3">
    <property type="method" value="X-ray"/>
    <property type="resolution" value="2.50 A"/>
    <property type="chains" value="A=2-280"/>
</dbReference>
<dbReference type="PDB" id="4FT5">
    <property type="method" value="X-ray"/>
    <property type="resolution" value="2.40 A"/>
    <property type="chains" value="A=2-280"/>
</dbReference>
<dbReference type="PDB" id="4FT7">
    <property type="method" value="X-ray"/>
    <property type="resolution" value="2.20 A"/>
    <property type="chains" value="A=2-280"/>
</dbReference>
<dbReference type="PDB" id="4FT9">
    <property type="method" value="X-ray"/>
    <property type="resolution" value="2.20 A"/>
    <property type="chains" value="A=2-280"/>
</dbReference>
<dbReference type="PDB" id="4FTA">
    <property type="method" value="X-ray"/>
    <property type="resolution" value="2.40 A"/>
    <property type="chains" value="A=2-280"/>
</dbReference>
<dbReference type="PDB" id="4FTC">
    <property type="method" value="X-ray"/>
    <property type="resolution" value="2.00 A"/>
    <property type="chains" value="A=2-280"/>
</dbReference>
<dbReference type="PDB" id="4FTI">
    <property type="method" value="X-ray"/>
    <property type="resolution" value="2.20 A"/>
    <property type="chains" value="A=2-280"/>
</dbReference>
<dbReference type="PDB" id="4FTJ">
    <property type="method" value="X-ray"/>
    <property type="resolution" value="2.20 A"/>
    <property type="chains" value="A=2-280"/>
</dbReference>
<dbReference type="PDB" id="4FTK">
    <property type="method" value="X-ray"/>
    <property type="resolution" value="2.30 A"/>
    <property type="chains" value="A=2-280"/>
</dbReference>
<dbReference type="PDB" id="4FTL">
    <property type="method" value="X-ray"/>
    <property type="resolution" value="2.50 A"/>
    <property type="chains" value="A=2-280"/>
</dbReference>
<dbReference type="PDB" id="4FTM">
    <property type="method" value="X-ray"/>
    <property type="resolution" value="1.90 A"/>
    <property type="chains" value="A=2-280"/>
</dbReference>
<dbReference type="PDB" id="4FTN">
    <property type="method" value="X-ray"/>
    <property type="resolution" value="2.02 A"/>
    <property type="chains" value="A=2-280"/>
</dbReference>
<dbReference type="PDB" id="4FTO">
    <property type="method" value="X-ray"/>
    <property type="resolution" value="2.10 A"/>
    <property type="chains" value="A=2-280"/>
</dbReference>
<dbReference type="PDB" id="4FTQ">
    <property type="method" value="X-ray"/>
    <property type="resolution" value="2.00 A"/>
    <property type="chains" value="A=2-280"/>
</dbReference>
<dbReference type="PDB" id="4FTR">
    <property type="method" value="X-ray"/>
    <property type="resolution" value="2.25 A"/>
    <property type="chains" value="A=2-280"/>
</dbReference>
<dbReference type="PDB" id="4FTT">
    <property type="method" value="X-ray"/>
    <property type="resolution" value="2.30 A"/>
    <property type="chains" value="A=2-280"/>
</dbReference>
<dbReference type="PDB" id="4FTU">
    <property type="method" value="X-ray"/>
    <property type="resolution" value="2.10 A"/>
    <property type="chains" value="A=2-280"/>
</dbReference>
<dbReference type="PDB" id="4GH2">
    <property type="method" value="X-ray"/>
    <property type="resolution" value="2.03 A"/>
    <property type="chains" value="A=2-280"/>
</dbReference>
<dbReference type="PDB" id="4HYH">
    <property type="method" value="X-ray"/>
    <property type="resolution" value="1.70 A"/>
    <property type="chains" value="A=1-289"/>
</dbReference>
<dbReference type="PDB" id="4HYI">
    <property type="method" value="X-ray"/>
    <property type="resolution" value="1.40 A"/>
    <property type="chains" value="A=1-289"/>
</dbReference>
<dbReference type="PDB" id="4JIK">
    <property type="method" value="X-ray"/>
    <property type="resolution" value="1.90 A"/>
    <property type="chains" value="A=2-274"/>
</dbReference>
<dbReference type="PDB" id="4QYE">
    <property type="method" value="X-ray"/>
    <property type="resolution" value="2.05 A"/>
    <property type="chains" value="A=1-289"/>
</dbReference>
<dbReference type="PDB" id="4QYF">
    <property type="method" value="X-ray"/>
    <property type="resolution" value="2.15 A"/>
    <property type="chains" value="A=1-289"/>
</dbReference>
<dbReference type="PDB" id="4QYG">
    <property type="method" value="X-ray"/>
    <property type="resolution" value="1.75 A"/>
    <property type="chains" value="A/B=1-289"/>
</dbReference>
<dbReference type="PDB" id="4QYH">
    <property type="method" value="X-ray"/>
    <property type="resolution" value="1.90 A"/>
    <property type="chains" value="A/B=1-289"/>
</dbReference>
<dbReference type="PDB" id="4RVK">
    <property type="method" value="X-ray"/>
    <property type="resolution" value="1.85 A"/>
    <property type="chains" value="A=1-289"/>
</dbReference>
<dbReference type="PDB" id="4RVL">
    <property type="method" value="X-ray"/>
    <property type="resolution" value="1.85 A"/>
    <property type="chains" value="A=1-289"/>
</dbReference>
<dbReference type="PDB" id="4RVM">
    <property type="method" value="X-ray"/>
    <property type="resolution" value="1.86 A"/>
    <property type="chains" value="A=1-289"/>
</dbReference>
<dbReference type="PDB" id="5DLS">
    <property type="method" value="X-ray"/>
    <property type="resolution" value="2.15 A"/>
    <property type="chains" value="A=1-289"/>
</dbReference>
<dbReference type="PDB" id="5F4N">
    <property type="method" value="X-ray"/>
    <property type="resolution" value="1.91 A"/>
    <property type="chains" value="A=1-273"/>
</dbReference>
<dbReference type="PDB" id="5OOP">
    <property type="method" value="X-ray"/>
    <property type="resolution" value="1.70 A"/>
    <property type="chains" value="A=1-289"/>
</dbReference>
<dbReference type="PDB" id="5OOR">
    <property type="method" value="X-ray"/>
    <property type="resolution" value="1.90 A"/>
    <property type="chains" value="A=1-289"/>
</dbReference>
<dbReference type="PDB" id="5OOT">
    <property type="method" value="X-ray"/>
    <property type="resolution" value="2.10 A"/>
    <property type="chains" value="A=1-289"/>
</dbReference>
<dbReference type="PDB" id="5OP2">
    <property type="method" value="X-ray"/>
    <property type="resolution" value="1.90 A"/>
    <property type="chains" value="A=1-289"/>
</dbReference>
<dbReference type="PDB" id="5OP4">
    <property type="method" value="X-ray"/>
    <property type="resolution" value="2.00 A"/>
    <property type="chains" value="A=1-289"/>
</dbReference>
<dbReference type="PDB" id="5OP5">
    <property type="method" value="X-ray"/>
    <property type="resolution" value="1.90 A"/>
    <property type="chains" value="A=1-289"/>
</dbReference>
<dbReference type="PDB" id="5OP7">
    <property type="method" value="X-ray"/>
    <property type="resolution" value="1.80 A"/>
    <property type="chains" value="A=1-289"/>
</dbReference>
<dbReference type="PDB" id="5OPB">
    <property type="method" value="X-ray"/>
    <property type="resolution" value="1.55 A"/>
    <property type="chains" value="A=1-289"/>
</dbReference>
<dbReference type="PDB" id="5OPR">
    <property type="method" value="X-ray"/>
    <property type="resolution" value="1.95 A"/>
    <property type="chains" value="A=1-289"/>
</dbReference>
<dbReference type="PDB" id="5OPS">
    <property type="method" value="X-ray"/>
    <property type="resolution" value="2.00 A"/>
    <property type="chains" value="A=1-289"/>
</dbReference>
<dbReference type="PDB" id="5OPU">
    <property type="method" value="X-ray"/>
    <property type="resolution" value="1.55 A"/>
    <property type="chains" value="A=1-289"/>
</dbReference>
<dbReference type="PDB" id="5OPV">
    <property type="method" value="X-ray"/>
    <property type="resolution" value="1.90 A"/>
    <property type="chains" value="A=1-289"/>
</dbReference>
<dbReference type="PDB" id="5OQ5">
    <property type="method" value="X-ray"/>
    <property type="resolution" value="1.40 A"/>
    <property type="chains" value="A=1-289"/>
</dbReference>
<dbReference type="PDB" id="5OQ6">
    <property type="method" value="X-ray"/>
    <property type="resolution" value="1.95 A"/>
    <property type="chains" value="A=1-289"/>
</dbReference>
<dbReference type="PDB" id="5OQ7">
    <property type="method" value="X-ray"/>
    <property type="resolution" value="2.10 A"/>
    <property type="chains" value="A/B=1-289"/>
</dbReference>
<dbReference type="PDB" id="5OQ8">
    <property type="method" value="X-ray"/>
    <property type="resolution" value="2.00 A"/>
    <property type="chains" value="A=1-289"/>
</dbReference>
<dbReference type="PDB" id="5WI2">
    <property type="method" value="X-ray"/>
    <property type="resolution" value="2.50 A"/>
    <property type="chains" value="A/B=377-476"/>
</dbReference>
<dbReference type="PDB" id="6FC8">
    <property type="method" value="X-ray"/>
    <property type="resolution" value="1.61 A"/>
    <property type="chains" value="A=1-276"/>
</dbReference>
<dbReference type="PDB" id="6FCF">
    <property type="method" value="X-ray"/>
    <property type="resolution" value="1.85 A"/>
    <property type="chains" value="A=1-276"/>
</dbReference>
<dbReference type="PDB" id="6FCK">
    <property type="method" value="X-ray"/>
    <property type="resolution" value="1.90 A"/>
    <property type="chains" value="A=1-276"/>
</dbReference>
<dbReference type="PDB" id="7AKM">
    <property type="method" value="X-ray"/>
    <property type="resolution" value="1.93 A"/>
    <property type="chains" value="A/B=2-287"/>
</dbReference>
<dbReference type="PDB" id="7AKO">
    <property type="method" value="X-ray"/>
    <property type="resolution" value="1.80 A"/>
    <property type="chains" value="A/B=2-289"/>
</dbReference>
<dbReference type="PDB" id="7BJD">
    <property type="method" value="X-ray"/>
    <property type="resolution" value="2.00 A"/>
    <property type="chains" value="A=1-289"/>
</dbReference>
<dbReference type="PDB" id="7BJE">
    <property type="method" value="X-ray"/>
    <property type="resolution" value="1.80 A"/>
    <property type="chains" value="A=1-289"/>
</dbReference>
<dbReference type="PDB" id="7BJH">
    <property type="method" value="X-ray"/>
    <property type="resolution" value="1.80 A"/>
    <property type="chains" value="A=1-289"/>
</dbReference>
<dbReference type="PDB" id="7BJJ">
    <property type="method" value="X-ray"/>
    <property type="resolution" value="1.80 A"/>
    <property type="chains" value="A=1-289"/>
</dbReference>
<dbReference type="PDB" id="7BJM">
    <property type="method" value="X-ray"/>
    <property type="resolution" value="2.30 A"/>
    <property type="chains" value="A=1-289"/>
</dbReference>
<dbReference type="PDB" id="7BJO">
    <property type="method" value="X-ray"/>
    <property type="resolution" value="2.30 A"/>
    <property type="chains" value="A=1-289"/>
</dbReference>
<dbReference type="PDB" id="7BJR">
    <property type="method" value="X-ray"/>
    <property type="resolution" value="1.90 A"/>
    <property type="chains" value="A=1-289"/>
</dbReference>
<dbReference type="PDB" id="7BJX">
    <property type="method" value="X-ray"/>
    <property type="resolution" value="2.40 A"/>
    <property type="chains" value="A/B=1-289"/>
</dbReference>
<dbReference type="PDB" id="7BK1">
    <property type="method" value="X-ray"/>
    <property type="resolution" value="2.00 A"/>
    <property type="chains" value="A=1-289"/>
</dbReference>
<dbReference type="PDB" id="7BK2">
    <property type="method" value="X-ray"/>
    <property type="resolution" value="2.00 A"/>
    <property type="chains" value="A=1-289"/>
</dbReference>
<dbReference type="PDB" id="7BK3">
    <property type="method" value="X-ray"/>
    <property type="resolution" value="2.00 A"/>
    <property type="chains" value="A=1-289"/>
</dbReference>
<dbReference type="PDB" id="7BKN">
    <property type="method" value="X-ray"/>
    <property type="resolution" value="2.74 A"/>
    <property type="chains" value="A=1-289"/>
</dbReference>
<dbReference type="PDB" id="7BKO">
    <property type="method" value="X-ray"/>
    <property type="resolution" value="2.30 A"/>
    <property type="chains" value="A=1-289"/>
</dbReference>
<dbReference type="PDB" id="7MCK">
    <property type="method" value="X-ray"/>
    <property type="resolution" value="1.65 A"/>
    <property type="chains" value="A=1-289"/>
</dbReference>
<dbReference type="PDB" id="7SUF">
    <property type="method" value="X-ray"/>
    <property type="resolution" value="1.48 A"/>
    <property type="chains" value="A=1-289"/>
</dbReference>
<dbReference type="PDB" id="7SUG">
    <property type="method" value="X-ray"/>
    <property type="resolution" value="1.48 A"/>
    <property type="chains" value="A=1-289"/>
</dbReference>
<dbReference type="PDB" id="7SUH">
    <property type="method" value="X-ray"/>
    <property type="resolution" value="2.46 A"/>
    <property type="chains" value="A=1-289"/>
</dbReference>
<dbReference type="PDB" id="7SUI">
    <property type="method" value="X-ray"/>
    <property type="resolution" value="2.12 A"/>
    <property type="chains" value="A=1-289"/>
</dbReference>
<dbReference type="PDB" id="7SUJ">
    <property type="method" value="X-ray"/>
    <property type="resolution" value="2.30 A"/>
    <property type="chains" value="A/B=1-289"/>
</dbReference>
<dbReference type="PDB" id="8E80">
    <property type="method" value="X-ray"/>
    <property type="resolution" value="1.49 A"/>
    <property type="chains" value="A=1-289"/>
</dbReference>
<dbReference type="PDB" id="8E81">
    <property type="method" value="X-ray"/>
    <property type="resolution" value="1.62 A"/>
    <property type="chains" value="A=1-289"/>
</dbReference>
<dbReference type="PDB" id="8SIV">
    <property type="method" value="X-ray"/>
    <property type="resolution" value="1.76 A"/>
    <property type="chains" value="A=1-289"/>
</dbReference>
<dbReference type="PDB" id="8SIW">
    <property type="method" value="X-ray"/>
    <property type="resolution" value="1.88 A"/>
    <property type="chains" value="A/B=1-289"/>
</dbReference>
<dbReference type="PDB" id="8SIX">
    <property type="method" value="X-ray"/>
    <property type="resolution" value="1.55 A"/>
    <property type="chains" value="A=1-289"/>
</dbReference>
<dbReference type="PDB" id="9CE4">
    <property type="method" value="X-ray"/>
    <property type="resolution" value="1.31 A"/>
    <property type="chains" value="A=4-271"/>
</dbReference>
<dbReference type="PDBsum" id="1IA8"/>
<dbReference type="PDBsum" id="1NVQ"/>
<dbReference type="PDBsum" id="1NVR"/>
<dbReference type="PDBsum" id="1NVS"/>
<dbReference type="PDBsum" id="1ZLT"/>
<dbReference type="PDBsum" id="1ZYS"/>
<dbReference type="PDBsum" id="2AYP"/>
<dbReference type="PDBsum" id="2BR1"/>
<dbReference type="PDBsum" id="2BRB"/>
<dbReference type="PDBsum" id="2BRG"/>
<dbReference type="PDBsum" id="2BRH"/>
<dbReference type="PDBsum" id="2BRM"/>
<dbReference type="PDBsum" id="2BRN"/>
<dbReference type="PDBsum" id="2BRO"/>
<dbReference type="PDBsum" id="2C3J"/>
<dbReference type="PDBsum" id="2C3K"/>
<dbReference type="PDBsum" id="2C3L"/>
<dbReference type="PDBsum" id="2CGU"/>
<dbReference type="PDBsum" id="2CGV"/>
<dbReference type="PDBsum" id="2CGW"/>
<dbReference type="PDBsum" id="2CGX"/>
<dbReference type="PDBsum" id="2E9N"/>
<dbReference type="PDBsum" id="2E9O"/>
<dbReference type="PDBsum" id="2E9P"/>
<dbReference type="PDBsum" id="2E9U"/>
<dbReference type="PDBsum" id="2E9V"/>
<dbReference type="PDBsum" id="2GDO"/>
<dbReference type="PDBsum" id="2GHG"/>
<dbReference type="PDBsum" id="2HOG"/>
<dbReference type="PDBsum" id="2HXL"/>
<dbReference type="PDBsum" id="2HXQ"/>
<dbReference type="PDBsum" id="2HY0"/>
<dbReference type="PDBsum" id="2QHM"/>
<dbReference type="PDBsum" id="2QHN"/>
<dbReference type="PDBsum" id="2R0U"/>
<dbReference type="PDBsum" id="2WMQ"/>
<dbReference type="PDBsum" id="2WMR"/>
<dbReference type="PDBsum" id="2WMS"/>
<dbReference type="PDBsum" id="2WMT"/>
<dbReference type="PDBsum" id="2WMU"/>
<dbReference type="PDBsum" id="2WMV"/>
<dbReference type="PDBsum" id="2WMW"/>
<dbReference type="PDBsum" id="2WMX"/>
<dbReference type="PDBsum" id="2X8D"/>
<dbReference type="PDBsum" id="2X8E"/>
<dbReference type="PDBsum" id="2X8I"/>
<dbReference type="PDBsum" id="2XEY"/>
<dbReference type="PDBsum" id="2XEZ"/>
<dbReference type="PDBsum" id="2XF0"/>
<dbReference type="PDBsum" id="2YDI"/>
<dbReference type="PDBsum" id="2YDJ"/>
<dbReference type="PDBsum" id="2YDK"/>
<dbReference type="PDBsum" id="2YER"/>
<dbReference type="PDBsum" id="2YEX"/>
<dbReference type="PDBsum" id="2YM3"/>
<dbReference type="PDBsum" id="2YM4"/>
<dbReference type="PDBsum" id="2YM5"/>
<dbReference type="PDBsum" id="2YM6"/>
<dbReference type="PDBsum" id="2YM7"/>
<dbReference type="PDBsum" id="2YM8"/>
<dbReference type="PDBsum" id="2YWP"/>
<dbReference type="PDBsum" id="3F9N"/>
<dbReference type="PDBsum" id="3JVR"/>
<dbReference type="PDBsum" id="3JVS"/>
<dbReference type="PDBsum" id="3NLB"/>
<dbReference type="PDBsum" id="3OT3"/>
<dbReference type="PDBsum" id="3OT8"/>
<dbReference type="PDBsum" id="3PA3"/>
<dbReference type="PDBsum" id="3PA4"/>
<dbReference type="PDBsum" id="3PA5"/>
<dbReference type="PDBsum" id="3TKH"/>
<dbReference type="PDBsum" id="3TKI"/>
<dbReference type="PDBsum" id="3U9N"/>
<dbReference type="PDBsum" id="4FSM"/>
<dbReference type="PDBsum" id="4FSN"/>
<dbReference type="PDBsum" id="4FSQ"/>
<dbReference type="PDBsum" id="4FSR"/>
<dbReference type="PDBsum" id="4FST"/>
<dbReference type="PDBsum" id="4FSU"/>
<dbReference type="PDBsum" id="4FSW"/>
<dbReference type="PDBsum" id="4FSY"/>
<dbReference type="PDBsum" id="4FSZ"/>
<dbReference type="PDBsum" id="4FT0"/>
<dbReference type="PDBsum" id="4FT3"/>
<dbReference type="PDBsum" id="4FT5"/>
<dbReference type="PDBsum" id="4FT7"/>
<dbReference type="PDBsum" id="4FT9"/>
<dbReference type="PDBsum" id="4FTA"/>
<dbReference type="PDBsum" id="4FTC"/>
<dbReference type="PDBsum" id="4FTI"/>
<dbReference type="PDBsum" id="4FTJ"/>
<dbReference type="PDBsum" id="4FTK"/>
<dbReference type="PDBsum" id="4FTL"/>
<dbReference type="PDBsum" id="4FTM"/>
<dbReference type="PDBsum" id="4FTN"/>
<dbReference type="PDBsum" id="4FTO"/>
<dbReference type="PDBsum" id="4FTQ"/>
<dbReference type="PDBsum" id="4FTR"/>
<dbReference type="PDBsum" id="4FTT"/>
<dbReference type="PDBsum" id="4FTU"/>
<dbReference type="PDBsum" id="4GH2"/>
<dbReference type="PDBsum" id="4HYH"/>
<dbReference type="PDBsum" id="4HYI"/>
<dbReference type="PDBsum" id="4JIK"/>
<dbReference type="PDBsum" id="4QYE"/>
<dbReference type="PDBsum" id="4QYF"/>
<dbReference type="PDBsum" id="4QYG"/>
<dbReference type="PDBsum" id="4QYH"/>
<dbReference type="PDBsum" id="4RVK"/>
<dbReference type="PDBsum" id="4RVL"/>
<dbReference type="PDBsum" id="4RVM"/>
<dbReference type="PDBsum" id="5DLS"/>
<dbReference type="PDBsum" id="5F4N"/>
<dbReference type="PDBsum" id="5OOP"/>
<dbReference type="PDBsum" id="5OOR"/>
<dbReference type="PDBsum" id="5OOT"/>
<dbReference type="PDBsum" id="5OP2"/>
<dbReference type="PDBsum" id="5OP4"/>
<dbReference type="PDBsum" id="5OP5"/>
<dbReference type="PDBsum" id="5OP7"/>
<dbReference type="PDBsum" id="5OPB"/>
<dbReference type="PDBsum" id="5OPR"/>
<dbReference type="PDBsum" id="5OPS"/>
<dbReference type="PDBsum" id="5OPU"/>
<dbReference type="PDBsum" id="5OPV"/>
<dbReference type="PDBsum" id="5OQ5"/>
<dbReference type="PDBsum" id="5OQ6"/>
<dbReference type="PDBsum" id="5OQ7"/>
<dbReference type="PDBsum" id="5OQ8"/>
<dbReference type="PDBsum" id="5WI2"/>
<dbReference type="PDBsum" id="6FC8"/>
<dbReference type="PDBsum" id="6FCF"/>
<dbReference type="PDBsum" id="6FCK"/>
<dbReference type="PDBsum" id="7AKM"/>
<dbReference type="PDBsum" id="7AKO"/>
<dbReference type="PDBsum" id="7BJD"/>
<dbReference type="PDBsum" id="7BJE"/>
<dbReference type="PDBsum" id="7BJH"/>
<dbReference type="PDBsum" id="7BJJ"/>
<dbReference type="PDBsum" id="7BJM"/>
<dbReference type="PDBsum" id="7BJO"/>
<dbReference type="PDBsum" id="7BJR"/>
<dbReference type="PDBsum" id="7BJX"/>
<dbReference type="PDBsum" id="7BK1"/>
<dbReference type="PDBsum" id="7BK2"/>
<dbReference type="PDBsum" id="7BK3"/>
<dbReference type="PDBsum" id="7BKN"/>
<dbReference type="PDBsum" id="7BKO"/>
<dbReference type="PDBsum" id="7MCK"/>
<dbReference type="PDBsum" id="7SUF"/>
<dbReference type="PDBsum" id="7SUG"/>
<dbReference type="PDBsum" id="7SUH"/>
<dbReference type="PDBsum" id="7SUI"/>
<dbReference type="PDBsum" id="7SUJ"/>
<dbReference type="PDBsum" id="8E80"/>
<dbReference type="PDBsum" id="8E81"/>
<dbReference type="PDBsum" id="8SIV"/>
<dbReference type="PDBsum" id="8SIW"/>
<dbReference type="PDBsum" id="8SIX"/>
<dbReference type="PDBsum" id="9CE4"/>
<dbReference type="SMR" id="O14757"/>
<dbReference type="BioGRID" id="107536">
    <property type="interactions" value="244"/>
</dbReference>
<dbReference type="CORUM" id="O14757"/>
<dbReference type="DIP" id="DIP-24182N"/>
<dbReference type="ELM" id="O14757"/>
<dbReference type="FunCoup" id="O14757">
    <property type="interactions" value="3056"/>
</dbReference>
<dbReference type="IntAct" id="O14757">
    <property type="interactions" value="92"/>
</dbReference>
<dbReference type="MINT" id="O14757"/>
<dbReference type="STRING" id="9606.ENSP00000391090"/>
<dbReference type="BindingDB" id="O14757"/>
<dbReference type="ChEMBL" id="CHEMBL4630"/>
<dbReference type="DrugBank" id="DB07647">
    <property type="generic name" value="(2R)-1-[(5,6-DIPHENYL-7H-PYRROLO[2,3-D]PYRIMIDIN-4-YL)AMINO]PROPAN-2-OL"/>
</dbReference>
<dbReference type="DrugBank" id="DB07648">
    <property type="generic name" value="(2R)-3-{[(4Z)-5,6-DIPHENYL-6,7-DIHYDRO-4H-PYRROLO[2,3-D]PYRIMIDIN-4-YLIDENE]AMINO}PROPANE-1,2-DIOL"/>
</dbReference>
<dbReference type="DrugBank" id="DB07037">
    <property type="generic name" value="(2S)-1-AMINO-3-[(5-NITROQUINOLIN-8-YL)AMINO]PROPAN-2-OL"/>
</dbReference>
<dbReference type="DrugBank" id="DB07243">
    <property type="generic name" value="(3-ENDO)-8-METHYL-8-AZABICYCLO[3.2.1]OCT-3-YL 1H-PYRROLO[2,3-B]PYRIDINE-3-CARBOXYLATE"/>
</dbReference>
<dbReference type="DrugBank" id="DB07078">
    <property type="generic name" value="(3Z)-6-(4-HYDROXY-3-METHOXYPHENYL)-3-(1H-PYRROL-2-YLMETHYLENE)-1,3-DIHYDRO-2H-INDOL-2-ONE"/>
</dbReference>
<dbReference type="DrugBank" id="DB07654">
    <property type="generic name" value="(5,6-DIPHENYL-FURO[2,3-D]PYRIMIDIN-4-YLAMINO)-ACETIC"/>
</dbReference>
<dbReference type="DrugBank" id="DB07213">
    <property type="generic name" value="(5-{3-[5-(PIPERIDIN-1-YLMETHYL)-1H-INDOL-2-YL]-1H-INDAZOL-6-YL}-2H-1,2,3-TRIAZOL-4-YL)METHANOL"/>
</dbReference>
<dbReference type="DrugBank" id="DB07314">
    <property type="generic name" value="1-(5-CHLORO-2,4-DIMETHOXYPHENYL)-3-(5-CYANOPYRAZIN-2-YL)UREA"/>
</dbReference>
<dbReference type="DrugBank" id="DB07228">
    <property type="generic name" value="1-(5-CHLORO-2-METHOXYPHENYL)-3-{6-[2-(DIMETHYLAMINO)-1-METHYLETHOXY]PYRAZIN-2-YL}UREA"/>
</dbReference>
<dbReference type="DrugBank" id="DB08781">
    <property type="generic name" value="1-[(2S)-4-(5-BROMO-1H-PYRAZOLO[3,4-B]PYRIDIN-4-YL)MORPHOLIN-2-YL]METHANAMINE"/>
</dbReference>
<dbReference type="DrugBank" id="DB08774">
    <property type="generic name" value="1-[(2S)-4-(5-phenyl-1H-pyrazolo[3,4-b]pyridin-4-yl)morpholin-2-yl]methanamine"/>
</dbReference>
<dbReference type="DrugBank" id="DB07311">
    <property type="generic name" value="18-CHLORO-11,12,13,14-TETRAHYDRO-1H,10H-8,4-(AZENO)-9,15,1,3,6-BENZODIOXATRIAZACYCLOHEPTADECIN-2-ONE"/>
</dbReference>
<dbReference type="DrugBank" id="DB07034">
    <property type="generic name" value="2,2'-{[9-(HYDROXYIMINO)-9H-FLUORENE-2,7-DIYL]BIS(OXY)}DIACETIC ACID"/>
</dbReference>
<dbReference type="DrugBank" id="DB07038">
    <property type="generic name" value="2-(cyclohexylamino)benzoic acid"/>
</dbReference>
<dbReference type="DrugBank" id="DB08779">
    <property type="generic name" value="2-(methylsulfanyl)-5-(thiophen-2-ylmethyl)-1H-imidazol-4-ol"/>
</dbReference>
<dbReference type="DrugBank" id="DB08393">
    <property type="generic name" value="2-[(5,6-DIPHENYLFURO[2,3-D]PYRIMIDIN-4-YL)AMINO]ETHANOL"/>
</dbReference>
<dbReference type="DrugBank" id="DB08392">
    <property type="generic name" value="2-[5,6-BIS-(4-METHOXY-PHENYL)-FURO[2,3-D]PYRIMIDIN-4-YLAMINO]-ETHANOL"/>
</dbReference>
<dbReference type="DrugBank" id="DB07959">
    <property type="generic name" value="3-(1H-BENZIMIDAZOL-2-YL)-1H-INDAZOLE"/>
</dbReference>
<dbReference type="DrugBank" id="DB07075">
    <property type="generic name" value="3-(5-{[4-(AMINOMETHYL)PIPERIDIN-1-YL]METHYL}-1H-INDOL-2-YL)-1H-INDAZOLE-6-CARBONITRILE"/>
</dbReference>
<dbReference type="DrugBank" id="DB07025">
    <property type="generic name" value="3-(5-{[4-(AMINOMETHYL)PIPERIDIN-1-YL]METHYL}-1H-INDOL-2-YL)QUINOLIN-2(1H)-ONE"/>
</dbReference>
<dbReference type="DrugBank" id="DB07655">
    <property type="generic name" value="3-AMINO-3-BENZYL-[4.3.0]BICYCLO-1,6-DIAZANONAN-2-ONE"/>
</dbReference>
<dbReference type="DrugBank" id="DB07320">
    <property type="generic name" value="4-(6-{[(4-METHYLCYCLOHEXYL)AMINO]METHYL}-1,4-DIHYDROINDENO[1,2-C]PYRAZOL-3-YL)BENZOIC ACID"/>
</dbReference>
<dbReference type="DrugBank" id="DB07336">
    <property type="generic name" value="4-[3-(1H-BENZIMIDAZOL-2-YL)-1H-INDAZOL-6-YL]-2-METHOXYPHENOL"/>
</dbReference>
<dbReference type="DrugBank" id="DB08777">
    <property type="generic name" value="5,6,7,8-TETRAHYDRO[1]BENZOTHIENO[2,3-D]PYRIMIDIN-4(3H)-ONE"/>
</dbReference>
<dbReference type="DrugBank" id="DB07158">
    <property type="generic name" value="5-ETHYL-3-METHYL-1,5-DIHYDRO-4H-PYRAZOLO[4,3-C]QUINOLIN-4-ONE"/>
</dbReference>
<dbReference type="DrugBank" id="DB08780">
    <property type="generic name" value="6-MORPHOLIN-4-YL-9H-PURINE"/>
</dbReference>
<dbReference type="DrugBank" id="DB01933">
    <property type="generic name" value="7-Hydroxystaurosporine"/>
</dbReference>
<dbReference type="DrugBank" id="DB08778">
    <property type="generic name" value="[4-amino-2-(tert-butylamino)-1,3-thiazol-5-yl](phenyl)methanone"/>
</dbReference>
<dbReference type="DrugBank" id="DB12242">
    <property type="generic name" value="AZD-7762"/>
</dbReference>
<dbReference type="DrugBank" id="DB03777">
    <property type="generic name" value="Bisindolylmaleimide I"/>
</dbReference>
<dbReference type="DrugBank" id="DB06852">
    <property type="generic name" value="CHIR-124"/>
</dbReference>
<dbReference type="DrugBank" id="DB12429">
    <property type="generic name" value="CI-1040"/>
</dbReference>
<dbReference type="DrugBank" id="DB04367">
    <property type="generic name" value="Debromohymenialdisine"/>
</dbReference>
<dbReference type="DrugBank" id="DB06486">
    <property type="generic name" value="Enzastaurin"/>
</dbReference>
<dbReference type="DrugBank" id="DB12010">
    <property type="generic name" value="Fostamatinib"/>
</dbReference>
<dbReference type="DrugBank" id="DB14791">
    <property type="generic name" value="GDC-0425"/>
</dbReference>
<dbReference type="DrugBank" id="DB12284">
    <property type="generic name" value="LY-2608204"/>
</dbReference>
<dbReference type="DrugBank" id="DB11899">
    <property type="generic name" value="MK-8776"/>
</dbReference>
<dbReference type="DrugBank" id="DB08776">
    <property type="generic name" value="N-(4-OXO-5,6,7,8-TETRAHYDRO-4H-[1,3]THIAZOLO[5,4-C]AZEPIN-2-YL)ACETAMIDE"/>
</dbReference>
<dbReference type="DrugBank" id="DB07653">
    <property type="generic name" value="N-(5,6-DIPHENYLFURO[2,3-D]PYRIMIDIN-4-YL)GLYCINE"/>
</dbReference>
<dbReference type="DrugBank" id="DB06876">
    <property type="generic name" value="N-{5-[4-(4-METHYLPIPERAZIN-1-YL)PHENYL]-1H-PYRROLO[2,3-B]PYRIDIN-3-YL}NICOTINAMIDE"/>
</dbReference>
<dbReference type="DrugBank" id="DB07126">
    <property type="generic name" value="O6-CYCLOHEXYLMETHOXY-2-(4'-SULPHAMOYLANILINO) PURINE"/>
</dbReference>
<dbReference type="DrugBank" id="DB12611">
    <property type="generic name" value="PF-477736"/>
</dbReference>
<dbReference type="DrugBank" id="DB12008">
    <property type="generic name" value="Prexasertib"/>
</dbReference>
<dbReference type="DrugBank" id="DB11662">
    <property type="generic name" value="Rabusertib"/>
</dbReference>
<dbReference type="DrugBank" id="DB08683">
    <property type="generic name" value="REL-(9R,12S)-9,10,11,12-TETRAHYDRO-9,12-EPOXY-1H-DIINDOLO[1,2,3-FG:3',2',1'-KL]PYRROLO[3,4-I][1,6]BENZODIAZOCINE-1,3(2H)-DIONE"/>
</dbReference>
<dbReference type="DrugBank" id="DB17051">
    <property type="generic name" value="SB-218078"/>
</dbReference>
<dbReference type="DrugBank" id="DB04462">
    <property type="generic name" value="Tetrabromo-2-Benzotriazole"/>
</dbReference>
<dbReference type="DrugBank" id="DB05149">
    <property type="generic name" value="XL844"/>
</dbReference>
<dbReference type="DrugCentral" id="O14757"/>
<dbReference type="GuidetoPHARMACOLOGY" id="1987"/>
<dbReference type="GlyGen" id="O14757">
    <property type="glycosylation" value="1 site, 1 O-linked glycan (1 site)"/>
</dbReference>
<dbReference type="iPTMnet" id="O14757"/>
<dbReference type="MetOSite" id="O14757"/>
<dbReference type="PhosphoSitePlus" id="O14757"/>
<dbReference type="BioMuta" id="CHEK1"/>
<dbReference type="CPTAC" id="CPTAC-3223"/>
<dbReference type="CPTAC" id="CPTAC-3282"/>
<dbReference type="CPTAC" id="CPTAC-5888"/>
<dbReference type="CPTAC" id="CPTAC-922"/>
<dbReference type="jPOST" id="O14757"/>
<dbReference type="MassIVE" id="O14757"/>
<dbReference type="PaxDb" id="9606-ENSP00000388648"/>
<dbReference type="PeptideAtlas" id="O14757"/>
<dbReference type="ProteomicsDB" id="27577"/>
<dbReference type="ProteomicsDB" id="48208">
    <molecule id="O14757-1"/>
</dbReference>
<dbReference type="ProteomicsDB" id="48209">
    <molecule id="O14757-2"/>
</dbReference>
<dbReference type="Pumba" id="O14757"/>
<dbReference type="Antibodypedia" id="3671">
    <property type="antibodies" value="1863 antibodies from 48 providers"/>
</dbReference>
<dbReference type="CPTC" id="O14757">
    <property type="antibodies" value="6 antibodies"/>
</dbReference>
<dbReference type="DNASU" id="1111"/>
<dbReference type="Ensembl" id="ENST00000278916.8">
    <molecule id="O14757-3"/>
    <property type="protein sequence ID" value="ENSP00000278916.4"/>
    <property type="gene ID" value="ENSG00000149554.15"/>
</dbReference>
<dbReference type="Ensembl" id="ENST00000428830.6">
    <molecule id="O14757-1"/>
    <property type="protein sequence ID" value="ENSP00000412504.2"/>
    <property type="gene ID" value="ENSG00000149554.15"/>
</dbReference>
<dbReference type="Ensembl" id="ENST00000438015.7">
    <molecule id="O14757-1"/>
    <property type="protein sequence ID" value="ENSP00000388648.1"/>
    <property type="gene ID" value="ENSG00000149554.15"/>
</dbReference>
<dbReference type="Ensembl" id="ENST00000524737.6">
    <molecule id="O14757-1"/>
    <property type="protein sequence ID" value="ENSP00000432890.1"/>
    <property type="gene ID" value="ENSG00000149554.15"/>
</dbReference>
<dbReference type="Ensembl" id="ENST00000532449.6">
    <molecule id="O14757-1"/>
    <property type="protein sequence ID" value="ENSP00000481616.2"/>
    <property type="gene ID" value="ENSG00000149554.15"/>
</dbReference>
<dbReference type="Ensembl" id="ENST00000534070.5">
    <molecule id="O14757-1"/>
    <property type="protein sequence ID" value="ENSP00000435371.1"/>
    <property type="gene ID" value="ENSG00000149554.15"/>
</dbReference>
<dbReference type="Ensembl" id="ENST00000544373.5">
    <molecule id="O14757-2"/>
    <property type="protein sequence ID" value="ENSP00000442317.2"/>
    <property type="gene ID" value="ENSG00000149554.15"/>
</dbReference>
<dbReference type="GeneID" id="1111"/>
<dbReference type="KEGG" id="hsa:1111"/>
<dbReference type="MANE-Select" id="ENST00000438015.7">
    <property type="protein sequence ID" value="ENSP00000388648.1"/>
    <property type="RefSeq nucleotide sequence ID" value="NM_001114122.3"/>
    <property type="RefSeq protein sequence ID" value="NP_001107594.1"/>
</dbReference>
<dbReference type="UCSC" id="uc001qcf.5">
    <molecule id="O14757-1"/>
    <property type="organism name" value="human"/>
</dbReference>
<dbReference type="AGR" id="HGNC:1925"/>
<dbReference type="CTD" id="1111"/>
<dbReference type="DisGeNET" id="1111"/>
<dbReference type="GeneCards" id="CHEK1"/>
<dbReference type="HGNC" id="HGNC:1925">
    <property type="gene designation" value="CHEK1"/>
</dbReference>
<dbReference type="HPA" id="ENSG00000149554">
    <property type="expression patterns" value="Tissue enhanced (bone marrow, lymphoid tissue, seminal vesicle)"/>
</dbReference>
<dbReference type="MalaCards" id="CHEK1"/>
<dbReference type="MIM" id="603078">
    <property type="type" value="gene"/>
</dbReference>
<dbReference type="MIM" id="620610">
    <property type="type" value="phenotype"/>
</dbReference>
<dbReference type="neXtProt" id="NX_O14757"/>
<dbReference type="OpenTargets" id="ENSG00000149554"/>
<dbReference type="PharmGKB" id="PA110"/>
<dbReference type="VEuPathDB" id="HostDB:ENSG00000149554"/>
<dbReference type="eggNOG" id="KOG0590">
    <property type="taxonomic scope" value="Eukaryota"/>
</dbReference>
<dbReference type="GeneTree" id="ENSGT00940000159682"/>
<dbReference type="InParanoid" id="O14757"/>
<dbReference type="OMA" id="GYTCKVG"/>
<dbReference type="OrthoDB" id="539158at2759"/>
<dbReference type="PAN-GO" id="O14757">
    <property type="GO annotations" value="4 GO annotations based on evolutionary models"/>
</dbReference>
<dbReference type="PhylomeDB" id="O14757"/>
<dbReference type="TreeFam" id="TF351441"/>
<dbReference type="BRENDA" id="2.7.11.1">
    <property type="organism ID" value="2681"/>
</dbReference>
<dbReference type="PathwayCommons" id="O14757"/>
<dbReference type="Reactome" id="R-HSA-1433557">
    <property type="pathway name" value="Signaling by SCF-KIT"/>
</dbReference>
<dbReference type="Reactome" id="R-HSA-176187">
    <property type="pathway name" value="Activation of ATR in response to replication stress"/>
</dbReference>
<dbReference type="Reactome" id="R-HSA-5693607">
    <property type="pathway name" value="Processing of DNA double-strand break ends"/>
</dbReference>
<dbReference type="Reactome" id="R-HSA-5693616">
    <property type="pathway name" value="Presynaptic phase of homologous DNA pairing and strand exchange"/>
</dbReference>
<dbReference type="Reactome" id="R-HSA-6796648">
    <property type="pathway name" value="TP53 Regulates Transcription of DNA Repair Genes"/>
</dbReference>
<dbReference type="Reactome" id="R-HSA-6804756">
    <property type="pathway name" value="Regulation of TP53 Activity through Phosphorylation"/>
</dbReference>
<dbReference type="Reactome" id="R-HSA-69473">
    <property type="pathway name" value="G2/M DNA damage checkpoint"/>
</dbReference>
<dbReference type="Reactome" id="R-HSA-69601">
    <property type="pathway name" value="Ubiquitin Mediated Degradation of Phosphorylated Cdc25A"/>
</dbReference>
<dbReference type="Reactome" id="R-HSA-75035">
    <property type="pathway name" value="Chk1/Chk2(Cds1) mediated inactivation of Cyclin B:Cdk1 complex"/>
</dbReference>
<dbReference type="Reactome" id="R-HSA-8953750">
    <property type="pathway name" value="Transcriptional Regulation by E2F6"/>
</dbReference>
<dbReference type="SignaLink" id="O14757"/>
<dbReference type="SIGNOR" id="O14757"/>
<dbReference type="BioGRID-ORCS" id="1111">
    <property type="hits" value="875 hits in 1208 CRISPR screens"/>
</dbReference>
<dbReference type="CD-CODE" id="8C2F96ED">
    <property type="entry name" value="Centrosome"/>
</dbReference>
<dbReference type="ChiTaRS" id="CHEK1">
    <property type="organism name" value="human"/>
</dbReference>
<dbReference type="EvolutionaryTrace" id="O14757"/>
<dbReference type="GeneWiki" id="CHEK1"/>
<dbReference type="GenomeRNAi" id="1111"/>
<dbReference type="Pharos" id="O14757">
    <property type="development level" value="Tchem"/>
</dbReference>
<dbReference type="PRO" id="PR:O14757"/>
<dbReference type="Proteomes" id="UP000005640">
    <property type="component" value="Chromosome 11"/>
</dbReference>
<dbReference type="RNAct" id="O14757">
    <property type="molecule type" value="protein"/>
</dbReference>
<dbReference type="Bgee" id="ENSG00000149554">
    <property type="expression patterns" value="Expressed in secondary oocyte and 130 other cell types or tissues"/>
</dbReference>
<dbReference type="ExpressionAtlas" id="O14757">
    <property type="expression patterns" value="baseline and differential"/>
</dbReference>
<dbReference type="GO" id="GO:0005813">
    <property type="term" value="C:centrosome"/>
    <property type="evidence" value="ECO:0000314"/>
    <property type="project" value="UniProtKB"/>
</dbReference>
<dbReference type="GO" id="GO:0000785">
    <property type="term" value="C:chromatin"/>
    <property type="evidence" value="ECO:0000250"/>
    <property type="project" value="UniProtKB"/>
</dbReference>
<dbReference type="GO" id="GO:0000794">
    <property type="term" value="C:condensed nuclear chromosome"/>
    <property type="evidence" value="ECO:0000314"/>
    <property type="project" value="UniProtKB"/>
</dbReference>
<dbReference type="GO" id="GO:0005737">
    <property type="term" value="C:cytoplasm"/>
    <property type="evidence" value="ECO:0000314"/>
    <property type="project" value="CAFA"/>
</dbReference>
<dbReference type="GO" id="GO:0005829">
    <property type="term" value="C:cytosol"/>
    <property type="evidence" value="ECO:0000304"/>
    <property type="project" value="Reactome"/>
</dbReference>
<dbReference type="GO" id="GO:0005615">
    <property type="term" value="C:extracellular space"/>
    <property type="evidence" value="ECO:0007005"/>
    <property type="project" value="UniProtKB"/>
</dbReference>
<dbReference type="GO" id="GO:0043231">
    <property type="term" value="C:intracellular membrane-bounded organelle"/>
    <property type="evidence" value="ECO:0000314"/>
    <property type="project" value="HPA"/>
</dbReference>
<dbReference type="GO" id="GO:0005654">
    <property type="term" value="C:nucleoplasm"/>
    <property type="evidence" value="ECO:0000314"/>
    <property type="project" value="HPA"/>
</dbReference>
<dbReference type="GO" id="GO:0005634">
    <property type="term" value="C:nucleus"/>
    <property type="evidence" value="ECO:0000314"/>
    <property type="project" value="UniProtKB"/>
</dbReference>
<dbReference type="GO" id="GO:0032991">
    <property type="term" value="C:protein-containing complex"/>
    <property type="evidence" value="ECO:0000314"/>
    <property type="project" value="CAFA"/>
</dbReference>
<dbReference type="GO" id="GO:0005657">
    <property type="term" value="C:replication fork"/>
    <property type="evidence" value="ECO:0007669"/>
    <property type="project" value="Ensembl"/>
</dbReference>
<dbReference type="GO" id="GO:0005524">
    <property type="term" value="F:ATP binding"/>
    <property type="evidence" value="ECO:0007669"/>
    <property type="project" value="UniProtKB-KW"/>
</dbReference>
<dbReference type="GO" id="GO:0035402">
    <property type="term" value="F:histone H3T11 kinase activity"/>
    <property type="evidence" value="ECO:0000314"/>
    <property type="project" value="UniProtKB"/>
</dbReference>
<dbReference type="GO" id="GO:0019904">
    <property type="term" value="F:protein domain specific binding"/>
    <property type="evidence" value="ECO:0000353"/>
    <property type="project" value="CAFA"/>
</dbReference>
<dbReference type="GO" id="GO:0004672">
    <property type="term" value="F:protein kinase activity"/>
    <property type="evidence" value="ECO:0000315"/>
    <property type="project" value="CACAO"/>
</dbReference>
<dbReference type="GO" id="GO:0106310">
    <property type="term" value="F:protein serine kinase activity"/>
    <property type="evidence" value="ECO:0007669"/>
    <property type="project" value="RHEA"/>
</dbReference>
<dbReference type="GO" id="GO:0004674">
    <property type="term" value="F:protein serine/threonine kinase activity"/>
    <property type="evidence" value="ECO:0000314"/>
    <property type="project" value="UniProtKB"/>
</dbReference>
<dbReference type="GO" id="GO:0006915">
    <property type="term" value="P:apoptotic process"/>
    <property type="evidence" value="ECO:0000314"/>
    <property type="project" value="UniProtKB"/>
</dbReference>
<dbReference type="GO" id="GO:1902742">
    <property type="term" value="P:apoptotic process involved in development"/>
    <property type="evidence" value="ECO:0007669"/>
    <property type="project" value="Ensembl"/>
</dbReference>
<dbReference type="GO" id="GO:0071260">
    <property type="term" value="P:cellular response to mechanical stimulus"/>
    <property type="evidence" value="ECO:0000270"/>
    <property type="project" value="UniProtKB"/>
</dbReference>
<dbReference type="GO" id="GO:0006338">
    <property type="term" value="P:chromatin remodeling"/>
    <property type="evidence" value="ECO:0000250"/>
    <property type="project" value="UniProtKB"/>
</dbReference>
<dbReference type="GO" id="GO:0000077">
    <property type="term" value="P:DNA damage checkpoint signaling"/>
    <property type="evidence" value="ECO:0000314"/>
    <property type="project" value="UniProtKB"/>
</dbReference>
<dbReference type="GO" id="GO:0006974">
    <property type="term" value="P:DNA damage response"/>
    <property type="evidence" value="ECO:0000315"/>
    <property type="project" value="UniProtKB"/>
</dbReference>
<dbReference type="GO" id="GO:0006281">
    <property type="term" value="P:DNA repair"/>
    <property type="evidence" value="ECO:0000315"/>
    <property type="project" value="UniProtKB"/>
</dbReference>
<dbReference type="GO" id="GO:0006260">
    <property type="term" value="P:DNA replication"/>
    <property type="evidence" value="ECO:0000304"/>
    <property type="project" value="Reactome"/>
</dbReference>
<dbReference type="GO" id="GO:0000086">
    <property type="term" value="P:G2/M transition of mitotic cell cycle"/>
    <property type="evidence" value="ECO:0007669"/>
    <property type="project" value="Ensembl"/>
</dbReference>
<dbReference type="GO" id="GO:0001833">
    <property type="term" value="P:inner cell mass cell proliferation"/>
    <property type="evidence" value="ECO:0007669"/>
    <property type="project" value="Ensembl"/>
</dbReference>
<dbReference type="GO" id="GO:0007095">
    <property type="term" value="P:mitotic G2 DNA damage checkpoint signaling"/>
    <property type="evidence" value="ECO:0000315"/>
    <property type="project" value="UniProtKB"/>
</dbReference>
<dbReference type="GO" id="GO:0044818">
    <property type="term" value="P:mitotic G2/M transition checkpoint"/>
    <property type="evidence" value="ECO:0000314"/>
    <property type="project" value="UniProt"/>
</dbReference>
<dbReference type="GO" id="GO:0070317">
    <property type="term" value="P:negative regulation of G0 to G1 transition"/>
    <property type="evidence" value="ECO:0000304"/>
    <property type="project" value="Reactome"/>
</dbReference>
<dbReference type="GO" id="GO:0045814">
    <property type="term" value="P:negative regulation of gene expression, epigenetic"/>
    <property type="evidence" value="ECO:0000250"/>
    <property type="project" value="UniProtKB"/>
</dbReference>
<dbReference type="GO" id="GO:0045839">
    <property type="term" value="P:negative regulation of mitotic nuclear division"/>
    <property type="evidence" value="ECO:0000314"/>
    <property type="project" value="UniProtKB"/>
</dbReference>
<dbReference type="GO" id="GO:0006997">
    <property type="term" value="P:nucleus organization"/>
    <property type="evidence" value="ECO:0007669"/>
    <property type="project" value="Ensembl"/>
</dbReference>
<dbReference type="GO" id="GO:0018107">
    <property type="term" value="P:peptidyl-threonine phosphorylation"/>
    <property type="evidence" value="ECO:0000314"/>
    <property type="project" value="UniProtKB"/>
</dbReference>
<dbReference type="GO" id="GO:0045787">
    <property type="term" value="P:positive regulation of cell cycle"/>
    <property type="evidence" value="ECO:0000314"/>
    <property type="project" value="CAFA"/>
</dbReference>
<dbReference type="GO" id="GO:0006468">
    <property type="term" value="P:protein phosphorylation"/>
    <property type="evidence" value="ECO:0000314"/>
    <property type="project" value="UniProtKB"/>
</dbReference>
<dbReference type="GO" id="GO:0042127">
    <property type="term" value="P:regulation of cell population proliferation"/>
    <property type="evidence" value="ECO:0007669"/>
    <property type="project" value="Ensembl"/>
</dbReference>
<dbReference type="GO" id="GO:0010569">
    <property type="term" value="P:regulation of double-strand break repair via homologous recombination"/>
    <property type="evidence" value="ECO:0000314"/>
    <property type="project" value="UniProtKB"/>
</dbReference>
<dbReference type="GO" id="GO:0046602">
    <property type="term" value="P:regulation of mitotic centrosome separation"/>
    <property type="evidence" value="ECO:0000314"/>
    <property type="project" value="UniProtKB"/>
</dbReference>
<dbReference type="GO" id="GO:1901796">
    <property type="term" value="P:regulation of signal transduction by p53 class mediator"/>
    <property type="evidence" value="ECO:0000304"/>
    <property type="project" value="Reactome"/>
</dbReference>
<dbReference type="GO" id="GO:0090399">
    <property type="term" value="P:replicative senescence"/>
    <property type="evidence" value="ECO:0000303"/>
    <property type="project" value="BHF-UCL"/>
</dbReference>
<dbReference type="GO" id="GO:0042770">
    <property type="term" value="P:signal transduction in response to DNA damage"/>
    <property type="evidence" value="ECO:0000314"/>
    <property type="project" value="UniProtKB"/>
</dbReference>
<dbReference type="CDD" id="cd14069">
    <property type="entry name" value="STKc_Chk1"/>
    <property type="match status" value="1"/>
</dbReference>
<dbReference type="FunFam" id="1.10.510.10:FF:000301">
    <property type="entry name" value="Serine/threonine-protein kinase Chk1"/>
    <property type="match status" value="1"/>
</dbReference>
<dbReference type="FunFam" id="3.30.200.20:FF:000229">
    <property type="entry name" value="Serine/threonine-protein kinase Chk1"/>
    <property type="match status" value="1"/>
</dbReference>
<dbReference type="FunFam" id="3.30.310.80:FF:000007">
    <property type="entry name" value="Serine/threonine-protein kinase Chk1 isoform 1"/>
    <property type="match status" value="1"/>
</dbReference>
<dbReference type="Gene3D" id="3.30.310.80">
    <property type="entry name" value="Kinase associated domain 1, KA1"/>
    <property type="match status" value="1"/>
</dbReference>
<dbReference type="Gene3D" id="3.30.200.20">
    <property type="entry name" value="Phosphorylase Kinase, domain 1"/>
    <property type="match status" value="1"/>
</dbReference>
<dbReference type="Gene3D" id="1.10.510.10">
    <property type="entry name" value="Transferase(Phosphotransferase) domain 1"/>
    <property type="match status" value="1"/>
</dbReference>
<dbReference type="InterPro" id="IPR034670">
    <property type="entry name" value="Chk1_catalytic_dom"/>
</dbReference>
<dbReference type="InterPro" id="IPR011009">
    <property type="entry name" value="Kinase-like_dom_sf"/>
</dbReference>
<dbReference type="InterPro" id="IPR000719">
    <property type="entry name" value="Prot_kinase_dom"/>
</dbReference>
<dbReference type="InterPro" id="IPR017441">
    <property type="entry name" value="Protein_kinase_ATP_BS"/>
</dbReference>
<dbReference type="InterPro" id="IPR008271">
    <property type="entry name" value="Ser/Thr_kinase_AS"/>
</dbReference>
<dbReference type="PANTHER" id="PTHR24346">
    <property type="entry name" value="MAP/MICROTUBULE AFFINITY-REGULATING KINASE"/>
    <property type="match status" value="1"/>
</dbReference>
<dbReference type="PANTHER" id="PTHR24346:SF107">
    <property type="entry name" value="SERINE_THREONINE-PROTEIN KINASE CHK1"/>
    <property type="match status" value="1"/>
</dbReference>
<dbReference type="Pfam" id="PF00069">
    <property type="entry name" value="Pkinase"/>
    <property type="match status" value="1"/>
</dbReference>
<dbReference type="SMART" id="SM00220">
    <property type="entry name" value="S_TKc"/>
    <property type="match status" value="1"/>
</dbReference>
<dbReference type="SUPFAM" id="SSF56112">
    <property type="entry name" value="Protein kinase-like (PK-like)"/>
    <property type="match status" value="1"/>
</dbReference>
<dbReference type="PROSITE" id="PS00107">
    <property type="entry name" value="PROTEIN_KINASE_ATP"/>
    <property type="match status" value="1"/>
</dbReference>
<dbReference type="PROSITE" id="PS50011">
    <property type="entry name" value="PROTEIN_KINASE_DOM"/>
    <property type="match status" value="1"/>
</dbReference>
<dbReference type="PROSITE" id="PS00108">
    <property type="entry name" value="PROTEIN_KINASE_ST"/>
    <property type="match status" value="1"/>
</dbReference>
<protein>
    <recommendedName>
        <fullName>Serine/threonine-protein kinase Chk1</fullName>
        <ecNumber evidence="5 15 22 31 58">2.7.11.1</ecNumber>
    </recommendedName>
    <alternativeName>
        <fullName>CHK1 checkpoint homolog</fullName>
    </alternativeName>
    <alternativeName>
        <fullName>Cell cycle checkpoint kinase</fullName>
    </alternativeName>
    <alternativeName>
        <fullName>Checkpoint kinase-1</fullName>
    </alternativeName>
</protein>
<evidence type="ECO:0000250" key="1"/>
<evidence type="ECO:0000250" key="2">
    <source>
        <dbReference type="UniProtKB" id="O35280"/>
    </source>
</evidence>
<evidence type="ECO:0000255" key="3">
    <source>
        <dbReference type="PROSITE-ProRule" id="PRU00159"/>
    </source>
</evidence>
<evidence type="ECO:0000256" key="4">
    <source>
        <dbReference type="SAM" id="MobiDB-lite"/>
    </source>
</evidence>
<evidence type="ECO:0000269" key="5">
    <source>
    </source>
</evidence>
<evidence type="ECO:0000269" key="6">
    <source>
    </source>
</evidence>
<evidence type="ECO:0000269" key="7">
    <source>
    </source>
</evidence>
<evidence type="ECO:0000269" key="8">
    <source>
    </source>
</evidence>
<evidence type="ECO:0000269" key="9">
    <source>
    </source>
</evidence>
<evidence type="ECO:0000269" key="10">
    <source>
    </source>
</evidence>
<evidence type="ECO:0000269" key="11">
    <source>
    </source>
</evidence>
<evidence type="ECO:0000269" key="12">
    <source>
    </source>
</evidence>
<evidence type="ECO:0000269" key="13">
    <source>
    </source>
</evidence>
<evidence type="ECO:0000269" key="14">
    <source>
    </source>
</evidence>
<evidence type="ECO:0000269" key="15">
    <source>
    </source>
</evidence>
<evidence type="ECO:0000269" key="16">
    <source>
    </source>
</evidence>
<evidence type="ECO:0000269" key="17">
    <source>
    </source>
</evidence>
<evidence type="ECO:0000269" key="18">
    <source>
    </source>
</evidence>
<evidence type="ECO:0000269" key="19">
    <source>
    </source>
</evidence>
<evidence type="ECO:0000269" key="20">
    <source>
    </source>
</evidence>
<evidence type="ECO:0000269" key="21">
    <source>
    </source>
</evidence>
<evidence type="ECO:0000269" key="22">
    <source>
    </source>
</evidence>
<evidence type="ECO:0000269" key="23">
    <source>
    </source>
</evidence>
<evidence type="ECO:0000269" key="24">
    <source>
    </source>
</evidence>
<evidence type="ECO:0000269" key="25">
    <source>
    </source>
</evidence>
<evidence type="ECO:0000269" key="26">
    <source>
    </source>
</evidence>
<evidence type="ECO:0000269" key="27">
    <source>
    </source>
</evidence>
<evidence type="ECO:0000269" key="28">
    <source>
    </source>
</evidence>
<evidence type="ECO:0000269" key="29">
    <source>
    </source>
</evidence>
<evidence type="ECO:0000269" key="30">
    <source>
    </source>
</evidence>
<evidence type="ECO:0000269" key="31">
    <source>
    </source>
</evidence>
<evidence type="ECO:0000269" key="32">
    <source>
    </source>
</evidence>
<evidence type="ECO:0000269" key="33">
    <source>
    </source>
</evidence>
<evidence type="ECO:0000269" key="34">
    <source>
    </source>
</evidence>
<evidence type="ECO:0000269" key="35">
    <source>
    </source>
</evidence>
<evidence type="ECO:0000269" key="36">
    <source>
    </source>
</evidence>
<evidence type="ECO:0000269" key="37">
    <source>
    </source>
</evidence>
<evidence type="ECO:0000269" key="38">
    <source>
    </source>
</evidence>
<evidence type="ECO:0000269" key="39">
    <source>
    </source>
</evidence>
<evidence type="ECO:0000269" key="40">
    <source>
    </source>
</evidence>
<evidence type="ECO:0000269" key="41">
    <source>
    </source>
</evidence>
<evidence type="ECO:0000269" key="42">
    <source>
    </source>
</evidence>
<evidence type="ECO:0000269" key="43">
    <source>
    </source>
</evidence>
<evidence type="ECO:0000269" key="44">
    <source>
    </source>
</evidence>
<evidence type="ECO:0000269" key="45">
    <source>
    </source>
</evidence>
<evidence type="ECO:0000269" key="46">
    <source>
    </source>
</evidence>
<evidence type="ECO:0000269" key="47">
    <source>
    </source>
</evidence>
<evidence type="ECO:0000269" key="48">
    <source>
    </source>
</evidence>
<evidence type="ECO:0000269" key="49">
    <source>
    </source>
</evidence>
<evidence type="ECO:0000269" key="50">
    <source>
    </source>
</evidence>
<evidence type="ECO:0000269" key="51">
    <source>
    </source>
</evidence>
<evidence type="ECO:0000269" key="52">
    <source>
    </source>
</evidence>
<evidence type="ECO:0000269" key="53">
    <source>
    </source>
</evidence>
<evidence type="ECO:0000269" key="54">
    <source>
    </source>
</evidence>
<evidence type="ECO:0000269" key="55">
    <source>
    </source>
</evidence>
<evidence type="ECO:0000269" key="56">
    <source>
    </source>
</evidence>
<evidence type="ECO:0000269" key="57">
    <source>
    </source>
</evidence>
<evidence type="ECO:0000269" key="58">
    <source>
    </source>
</evidence>
<evidence type="ECO:0000269" key="59">
    <source>
    </source>
</evidence>
<evidence type="ECO:0000269" key="60">
    <source ref="6"/>
</evidence>
<evidence type="ECO:0000269" key="61">
    <source ref="9"/>
</evidence>
<evidence type="ECO:0000303" key="62">
    <source>
    </source>
</evidence>
<evidence type="ECO:0000303" key="63">
    <source>
    </source>
</evidence>
<evidence type="ECO:0000305" key="64"/>
<evidence type="ECO:0007744" key="65">
    <source>
    </source>
</evidence>
<evidence type="ECO:0007744" key="66">
    <source>
    </source>
</evidence>
<evidence type="ECO:0007744" key="67">
    <source>
    </source>
</evidence>
<evidence type="ECO:0007744" key="68">
    <source>
    </source>
</evidence>
<evidence type="ECO:0007744" key="69">
    <source>
    </source>
</evidence>
<evidence type="ECO:0007744" key="70">
    <source>
    </source>
</evidence>
<evidence type="ECO:0007829" key="71">
    <source>
        <dbReference type="PDB" id="2C3J"/>
    </source>
</evidence>
<evidence type="ECO:0007829" key="72">
    <source>
        <dbReference type="PDB" id="2E9U"/>
    </source>
</evidence>
<evidence type="ECO:0007829" key="73">
    <source>
        <dbReference type="PDB" id="2GDO"/>
    </source>
</evidence>
<evidence type="ECO:0007829" key="74">
    <source>
        <dbReference type="PDB" id="2GHG"/>
    </source>
</evidence>
<evidence type="ECO:0007829" key="75">
    <source>
        <dbReference type="PDB" id="2XEY"/>
    </source>
</evidence>
<evidence type="ECO:0007829" key="76">
    <source>
        <dbReference type="PDB" id="2YEX"/>
    </source>
</evidence>
<evidence type="ECO:0007829" key="77">
    <source>
        <dbReference type="PDB" id="4HYI"/>
    </source>
</evidence>
<evidence type="ECO:0007829" key="78">
    <source>
        <dbReference type="PDB" id="5WI2"/>
    </source>
</evidence>
<evidence type="ECO:0007829" key="79">
    <source>
        <dbReference type="PDB" id="7SUF"/>
    </source>
</evidence>
<name>CHK1_HUMAN</name>
<feature type="chain" id="PRO_0000085848" description="Serine/threonine-protein kinase Chk1">
    <location>
        <begin position="1"/>
        <end position="476"/>
    </location>
</feature>
<feature type="domain" description="Protein kinase" evidence="3">
    <location>
        <begin position="9"/>
        <end position="265"/>
    </location>
</feature>
<feature type="region of interest" description="Interaction with CLSPN" evidence="1">
    <location>
        <begin position="1"/>
        <end position="265"/>
    </location>
</feature>
<feature type="region of interest" description="Disordered" evidence="4">
    <location>
        <begin position="270"/>
        <end position="327"/>
    </location>
</feature>
<feature type="region of interest" description="Autoinhibitory region">
    <location>
        <begin position="391"/>
        <end position="476"/>
    </location>
</feature>
<feature type="compositionally biased region" description="Polar residues" evidence="4">
    <location>
        <begin position="281"/>
        <end position="320"/>
    </location>
</feature>
<feature type="active site" description="Proton acceptor">
    <location>
        <position position="130"/>
    </location>
</feature>
<feature type="binding site" evidence="3">
    <location>
        <begin position="15"/>
        <end position="23"/>
    </location>
    <ligand>
        <name>ATP</name>
        <dbReference type="ChEBI" id="CHEBI:30616"/>
    </ligand>
</feature>
<feature type="binding site" evidence="3">
    <location>
        <position position="38"/>
    </location>
    <ligand>
        <name>ATP</name>
        <dbReference type="ChEBI" id="CHEBI:30616"/>
    </ligand>
</feature>
<feature type="modified residue" description="Phosphoserine" evidence="70">
    <location>
        <position position="280"/>
    </location>
</feature>
<feature type="modified residue" description="Phosphoserine" evidence="65 69">
    <location>
        <position position="286"/>
    </location>
</feature>
<feature type="modified residue" description="Phosphoserine" evidence="33 65 67 69 70">
    <location>
        <position position="296"/>
    </location>
</feature>
<feature type="modified residue" description="Phosphoserine" evidence="65 66 68 69 70">
    <location>
        <position position="301"/>
    </location>
</feature>
<feature type="modified residue" description="Phosphoserine; by ATM and ATR" evidence="8 13 14 15 16 18 23 33 36">
    <location>
        <position position="317"/>
    </location>
</feature>
<feature type="modified residue" description="Phosphoserine" evidence="70">
    <location>
        <position position="331"/>
    </location>
</feature>
<feature type="modified residue" description="Phosphoserine; by ATM and ATR" evidence="7 8 13 16 17 18 25 27 30 33 36 48 52 53">
    <location>
        <position position="345"/>
    </location>
</feature>
<feature type="modified residue" description="Phosphoserine" evidence="70">
    <location>
        <position position="467"/>
    </location>
</feature>
<feature type="modified residue" description="Phosphoserine" evidence="70">
    <location>
        <position position="468"/>
    </location>
</feature>
<feature type="cross-link" description="Glycyl lysine isopeptide (Lys-Gly) (interchain with G-Cter in ubiquitin)" evidence="54">
    <location>
        <position position="132"/>
    </location>
</feature>
<feature type="cross-link" description="Glycyl lysine isopeptide (Lys-Gly) (interchain with G-Cter in ubiquitin)" evidence="48">
    <location>
        <position position="436"/>
    </location>
</feature>
<feature type="splice variant" id="VSP_044008" description="In isoform 2." evidence="62 63">
    <location>
        <begin position="1"/>
        <end position="94"/>
    </location>
</feature>
<feature type="splice variant" id="VSP_044009" description="In isoform 2." evidence="62 63">
    <original>RIE</original>
    <variation>MEK</variation>
    <location>
        <begin position="95"/>
        <end position="97"/>
    </location>
</feature>
<feature type="splice variant" id="VSP_045075" description="In isoform 3." evidence="62">
    <location>
        <begin position="412"/>
        <end position="445"/>
    </location>
</feature>
<feature type="sequence variant" id="VAR_021123" description="In dbSNP:rs3731410." evidence="60">
    <original>R</original>
    <variation>Q</variation>
    <location>
        <position position="156"/>
    </location>
</feature>
<feature type="sequence variant" id="VAR_040407" description="In dbSNP:rs35817404." evidence="40">
    <original>E</original>
    <variation>V</variation>
    <location>
        <position position="223"/>
    </location>
</feature>
<feature type="sequence variant" id="VAR_040408" description="In dbSNP:rs34097480." evidence="40">
    <original>V</original>
    <variation>M</variation>
    <location>
        <position position="312"/>
    </location>
</feature>
<feature type="sequence variant" id="VAR_089161" description="In OZEMA21; likely pathogenic; results in failure of male and female pronuclei fusion when injected in mouse zygotes; increased kinase activity." evidence="57">
    <original>R</original>
    <variation>Q</variation>
    <location>
        <position position="379"/>
    </location>
</feature>
<feature type="sequence variant" id="VAR_089162" description="In OZEMA21; likely pathogenic; results in failure of male and female pronuclei fusion when injected in mouse zygotes; increased kinase activity." evidence="57">
    <original>R</original>
    <variation>K</variation>
    <location>
        <position position="420"/>
    </location>
</feature>
<feature type="sequence variant" id="VAR_089163" description="In OZEMA21; pathogenic; results in failure of male and female pronuclei fusion when injected in mouse zygotes; increased kinase activity." evidence="56 57">
    <original>R</original>
    <variation>Q</variation>
    <location>
        <position position="442"/>
    </location>
</feature>
<feature type="sequence variant" id="VAR_024571" description="In dbSNP:rs506504." evidence="6 26 29 45 58 59 60 61">
    <original>I</original>
    <variation>V</variation>
    <location>
        <position position="471"/>
    </location>
</feature>
<feature type="mutagenesis site" description="Abolishes kinase activity." evidence="13 25">
    <original>K</original>
    <variation>R</variation>
    <location>
        <position position="38"/>
    </location>
</feature>
<feature type="mutagenesis site" description="Abolishes kinase activity." evidence="5 8 9 10 14 24 28 58">
    <original>D</original>
    <variation>A</variation>
    <location>
        <position position="130"/>
    </location>
</feature>
<feature type="mutagenesis site" description="Strong reduction of chromatin-associated CHK1 ubiquitination." evidence="54">
    <original>K</original>
    <variation>R</variation>
    <location>
        <position position="132"/>
    </location>
</feature>
<feature type="mutagenesis site" description="Abrogates interaction with RAD51; when associated with A-345. Reduces phosphorylation and impairs activation by hydroxyurea and ionizing radiation. Abrogates nuclear retention upon checkpoint activation. Impairs interaction with FBXO6." evidence="8 14 16 18 32">
    <original>S</original>
    <variation>A</variation>
    <location>
        <position position="317"/>
    </location>
</feature>
<feature type="mutagenesis site" description="Enhances interaction with RAD51; when associated with E-345." evidence="8 14 16 18 32">
    <original>S</original>
    <variation>E</variation>
    <location>
        <position position="317"/>
    </location>
</feature>
<feature type="mutagenesis site" description="Impairs nuclear export." evidence="18">
    <original>F</original>
    <variation>A</variation>
    <location>
        <position position="344"/>
    </location>
</feature>
<feature type="mutagenesis site" description="Abrogates interaction with RAD51; when associated with A-317. Reduces phosphorylation and impairs activation by hydroxyurea and ionizing radiation. Impairs interaction with YWHAZ which is required for nuclear retention after checkpoint activation." evidence="8 14 16 18 32 48">
    <original>S</original>
    <variation>A</variation>
    <location>
        <position position="345"/>
    </location>
</feature>
<feature type="mutagenesis site" description="Enhances interaction with RAD51; when associated with E-317." evidence="8 14 16 18 32 48">
    <original>S</original>
    <variation>E</variation>
    <location>
        <position position="345"/>
    </location>
</feature>
<feature type="mutagenesis site" description="Impairs nuclear export." evidence="18">
    <original>M</original>
    <variation>A</variation>
    <location>
        <position position="353"/>
    </location>
</feature>
<feature type="mutagenesis site" description="No effect on phosphorylation induced by hydroxyurea." evidence="8">
    <original>S</original>
    <variation>A</variation>
    <location>
        <position position="357"/>
    </location>
</feature>
<feature type="mutagenesis site" description="No effect on phosphorylation induced by hydroxyurea." evidence="8">
    <original>S</original>
    <variation>A</variation>
    <location>
        <position position="366"/>
    </location>
</feature>
<feature type="mutagenesis site" description="In 3RE mutant. Disrupts the folding and/or conformation, allowing increased accessibility to FBXO6 component of SCF-type E3 ubiquitin ligase complex; when associated with E-376 and E-379." evidence="48">
    <original>R</original>
    <variation>E</variation>
    <location>
        <position position="372"/>
    </location>
</feature>
<feature type="mutagenesis site" description="In 3RE mutant. Disrupts the folding and/or conformation, allowing increased accessibility to FBXO6 component of SCF-type E3 ubiquitin ligase complex; when associated with E-372 and E-379." evidence="48">
    <original>R</original>
    <variation>E</variation>
    <location>
        <position position="376"/>
    </location>
</feature>
<feature type="mutagenesis site" description="In 3RE mutant. Disrupts the folding and/or conformation, allowing increased accessibility to FBXO6 component of SCF-type E3 ubiquitin ligase complex; when associated with E-372 and E-376." evidence="48">
    <original>R</original>
    <variation>E</variation>
    <location>
        <position position="379"/>
    </location>
</feature>
<feature type="mutagenesis site" description="Enhances stability of the protein, probably by preventing ubiquitination at this site." evidence="48">
    <original>K</original>
    <variation>R</variation>
    <location>
        <position position="436"/>
    </location>
</feature>
<feature type="mutagenesis site" description="No effect on phosphorylation induced by hydroxyurea." evidence="8">
    <original>S</original>
    <variation>A</variation>
    <location>
        <position position="468"/>
    </location>
</feature>
<feature type="sequence conflict" description="In Ref. 5; BAG56691." evidence="64" ref="5">
    <original>L</original>
    <variation>S</variation>
    <location>
        <position position="163"/>
    </location>
</feature>
<feature type="sequence conflict" description="In Ref. 4; BAG61665." evidence="64" ref="4">
    <original>D</original>
    <variation>G</variation>
    <location>
        <position position="220"/>
    </location>
</feature>
<feature type="sequence conflict" description="In Ref. 4; BAG61665." evidence="64" ref="4">
    <original>F</original>
    <variation>L</variation>
    <location>
        <position position="381"/>
    </location>
</feature>
<feature type="helix" evidence="76">
    <location>
        <begin position="3"/>
        <end position="8"/>
    </location>
</feature>
<feature type="strand" evidence="76">
    <location>
        <begin position="9"/>
        <end position="17"/>
    </location>
</feature>
<feature type="strand" evidence="76">
    <location>
        <begin position="19"/>
        <end position="28"/>
    </location>
</feature>
<feature type="turn" evidence="76">
    <location>
        <begin position="29"/>
        <end position="31"/>
    </location>
</feature>
<feature type="strand" evidence="76">
    <location>
        <begin position="34"/>
        <end position="41"/>
    </location>
</feature>
<feature type="helix" evidence="76">
    <location>
        <begin position="42"/>
        <end position="44"/>
    </location>
</feature>
<feature type="helix" evidence="76">
    <location>
        <begin position="48"/>
        <end position="60"/>
    </location>
</feature>
<feature type="strand" evidence="76">
    <location>
        <begin position="70"/>
        <end position="76"/>
    </location>
</feature>
<feature type="strand" evidence="76">
    <location>
        <begin position="79"/>
        <end position="85"/>
    </location>
</feature>
<feature type="strand" evidence="73">
    <location>
        <begin position="88"/>
        <end position="91"/>
    </location>
</feature>
<feature type="helix" evidence="76">
    <location>
        <begin position="92"/>
        <end position="95"/>
    </location>
</feature>
<feature type="turn" evidence="76">
    <location>
        <begin position="98"/>
        <end position="100"/>
    </location>
</feature>
<feature type="helix" evidence="76">
    <location>
        <begin position="104"/>
        <end position="123"/>
    </location>
</feature>
<feature type="strand" evidence="74">
    <location>
        <begin position="125"/>
        <end position="127"/>
    </location>
</feature>
<feature type="helix" evidence="76">
    <location>
        <begin position="133"/>
        <end position="135"/>
    </location>
</feature>
<feature type="strand" evidence="76">
    <location>
        <begin position="136"/>
        <end position="138"/>
    </location>
</feature>
<feature type="strand" evidence="76">
    <location>
        <begin position="144"/>
        <end position="146"/>
    </location>
</feature>
<feature type="helix" evidence="71">
    <location>
        <begin position="149"/>
        <end position="151"/>
    </location>
</feature>
<feature type="strand" evidence="79">
    <location>
        <begin position="153"/>
        <end position="157"/>
    </location>
</feature>
<feature type="helix" evidence="76">
    <location>
        <begin position="171"/>
        <end position="173"/>
    </location>
</feature>
<feature type="helix" evidence="76">
    <location>
        <begin position="176"/>
        <end position="179"/>
    </location>
</feature>
<feature type="strand" evidence="76">
    <location>
        <begin position="182"/>
        <end position="184"/>
    </location>
</feature>
<feature type="helix" evidence="76">
    <location>
        <begin position="186"/>
        <end position="203"/>
    </location>
</feature>
<feature type="strand" evidence="77">
    <location>
        <begin position="209"/>
        <end position="211"/>
    </location>
</feature>
<feature type="strand" evidence="75">
    <location>
        <begin position="213"/>
        <end position="215"/>
    </location>
</feature>
<feature type="helix" evidence="76">
    <location>
        <begin position="216"/>
        <end position="222"/>
    </location>
</feature>
<feature type="strand" evidence="72">
    <location>
        <begin position="227"/>
        <end position="229"/>
    </location>
</feature>
<feature type="helix" evidence="76">
    <location>
        <begin position="231"/>
        <end position="233"/>
    </location>
</feature>
<feature type="helix" evidence="76">
    <location>
        <begin position="236"/>
        <end position="245"/>
    </location>
</feature>
<feature type="turn" evidence="76">
    <location>
        <begin position="250"/>
        <end position="252"/>
    </location>
</feature>
<feature type="helix" evidence="76">
    <location>
        <begin position="256"/>
        <end position="259"/>
    </location>
</feature>
<feature type="turn" evidence="76">
    <location>
        <begin position="263"/>
        <end position="266"/>
    </location>
</feature>
<feature type="strand" evidence="78">
    <location>
        <begin position="379"/>
        <end position="384"/>
    </location>
</feature>
<feature type="helix" evidence="78">
    <location>
        <begin position="386"/>
        <end position="399"/>
    </location>
</feature>
<feature type="strand" evidence="78">
    <location>
        <begin position="403"/>
        <end position="417"/>
    </location>
</feature>
<feature type="strand" evidence="78">
    <location>
        <begin position="423"/>
        <end position="432"/>
    </location>
</feature>
<feature type="strand" evidence="78">
    <location>
        <begin position="434"/>
        <end position="446"/>
    </location>
</feature>
<feature type="helix" evidence="78">
    <location>
        <begin position="448"/>
        <end position="461"/>
    </location>
</feature>
<feature type="helix" evidence="78">
    <location>
        <begin position="463"/>
        <end position="465"/>
    </location>
</feature>